<proteinExistence type="evidence at protein level"/>
<sequence length="913" mass="101128">MGPEALSSLLLLLLVASGDADMKGHFDPAKCRYALGMQDRTIPDSDISASSSWSDSTAARHSRLESSDGDGAWCPAGSVFPKEEEYLQVDLQRLHLVALVGTQGRHAGGLGKEFSRSYRLRYSRDGRRWMGWKDRWGQEVISGNEDPEGVVLKDLGPPMVARLVRFYPRADRVMSVCLRVELYGCLWRDGLLSYTAPVGQTMYLSEAVYLNDSTYDGHTVGGLQYGGLGQLADGVVGLDDFRKSQELRVWPGYDYVGWSNHSFSSGYVEMEFEFDRLRAFQAMQVHCNNMHTLGARLPGGVECRFRRGPAMAWEGEPMRHNLGGNLGDPRARAVSVPLGGRVARFLQCRFLFAGPWLLFSEISFISDVVNNSSPALGGTFPPAPWWPPGPPPTNFSSLELEPRGQQPVAKAEGSPTAILIGCLVAIILLLLLIIALMLWRLHWRRLLSKAERRVLEEELTVHLSVPGDTILINNRPGPREPPPYQEPRPRGNPPHSAPCVPNGSALLLSNPAYRLLLATYARPPRGPGPPTPAWAKPTNTQAYSGDYMEPEKPGAPLLPPPPQNSVPHYAEADIVTLQGVTGGNTYAVPALPPGAVGDGPPRVDFPRSRLRFKEKLGEGQFGEVHLCEVDSPQDLVSLDFPLNVRKGHPLLVAVKILRPDATKNARNDFLKEVKIMSRLKDPNIIRLLGVCVQDDPLCMITDYMENGDLNQFLSAHQLEDKAAEGAPGDGQAAQGPTISYPMLLHVAAQIASGMRYLATLNFVHRDLATRNCLVGENFTIKIADFGMSRNLYAGDYYRVQGRAVLPIRWMAWECILMGKFTTASDVWAFGVTLWEVLMLCRAQPFGQLTDEQVIENAGEFFRDQGRQVYLSRPPACPQGLYELMLRCWSRESEQRPPFSQLHRFLAEDALNTV</sequence>
<keyword id="KW-0002">3D-structure</keyword>
<keyword id="KW-0025">Alternative splicing</keyword>
<keyword id="KW-0067">ATP-binding</keyword>
<keyword id="KW-0106">Calcium</keyword>
<keyword id="KW-1003">Cell membrane</keyword>
<keyword id="KW-0903">Direct protein sequencing</keyword>
<keyword id="KW-1015">Disulfide bond</keyword>
<keyword id="KW-0325">Glycoprotein</keyword>
<keyword id="KW-0418">Kinase</keyword>
<keyword id="KW-0421">Lactation</keyword>
<keyword id="KW-0472">Membrane</keyword>
<keyword id="KW-0479">Metal-binding</keyword>
<keyword id="KW-0547">Nucleotide-binding</keyword>
<keyword id="KW-0597">Phosphoprotein</keyword>
<keyword id="KW-0635">Pregnancy</keyword>
<keyword id="KW-1267">Proteomics identification</keyword>
<keyword id="KW-0675">Receptor</keyword>
<keyword id="KW-1185">Reference proteome</keyword>
<keyword id="KW-0964">Secreted</keyword>
<keyword id="KW-0732">Signal</keyword>
<keyword id="KW-0808">Transferase</keyword>
<keyword id="KW-0812">Transmembrane</keyword>
<keyword id="KW-1133">Transmembrane helix</keyword>
<keyword id="KW-0829">Tyrosine-protein kinase</keyword>
<protein>
    <recommendedName>
        <fullName>Epithelial discoidin domain-containing receptor 1</fullName>
        <shortName>Epithelial discoidin domain receptor 1</shortName>
        <ecNumber>2.7.10.1</ecNumber>
    </recommendedName>
    <alternativeName>
        <fullName>CD167 antigen-like family member A</fullName>
    </alternativeName>
    <alternativeName>
        <fullName>Cell adhesion kinase</fullName>
    </alternativeName>
    <alternativeName>
        <fullName>Discoidin receptor tyrosine kinase</fullName>
    </alternativeName>
    <alternativeName>
        <fullName>HGK2</fullName>
    </alternativeName>
    <alternativeName>
        <fullName>Mammary carcinoma kinase 10</fullName>
        <shortName>MCK-10</shortName>
    </alternativeName>
    <alternativeName>
        <fullName>Protein-tyrosine kinase 3A</fullName>
    </alternativeName>
    <alternativeName>
        <fullName>Protein-tyrosine kinase RTK-6</fullName>
    </alternativeName>
    <alternativeName>
        <fullName>TRK E</fullName>
    </alternativeName>
    <alternativeName>
        <fullName>Tyrosine kinase DDR</fullName>
    </alternativeName>
    <alternativeName>
        <fullName>Tyrosine-protein kinase CAK</fullName>
    </alternativeName>
    <cdAntigenName>CD167a</cdAntigenName>
</protein>
<reference key="1">
    <citation type="journal article" date="1993" name="J. Biol. Chem.">
        <title>Molecular cloning of trkE, a novel trk-related putative tyrosine kinase receptor isolated from normal human keratinocytes and widely expressed by normal human tissues.</title>
        <authorList>
            <person name="di Marco E."/>
            <person name="Cutuli N."/>
            <person name="Guerra L."/>
            <person name="Cancedda R."/>
            <person name="de Luca M."/>
        </authorList>
    </citation>
    <scope>NUCLEOTIDE SEQUENCE [MRNA] (ISOFORM 2)</scope>
    <source>
        <tissue>Brain</tissue>
        <tissue>Keratinocyte</tissue>
    </source>
</reference>
<reference key="2">
    <citation type="journal article" date="1993" name="Proc. Natl. Acad. Sci. U.S.A.">
        <title>A receptor tyrosine kinase found in breast carcinoma cells has an extracellular discoidin I-like domain.</title>
        <authorList>
            <person name="Johnson J.D."/>
            <person name="Edman J.C."/>
            <person name="Rutter W.J."/>
        </authorList>
    </citation>
    <scope>NUCLEOTIDE SEQUENCE [MRNA] (ISOFORM 1)</scope>
    <scope>VARIANT VAL-833</scope>
    <source>
        <tissue>Placenta</tissue>
    </source>
</reference>
<reference key="3">
    <citation type="journal article" date="1994" name="Cell Growth Differ.">
        <title>Isolation and characterization of an epithelial-specific receptor tyrosine kinase from an ovarian cancer cell line.</title>
        <authorList>
            <person name="Laval S."/>
            <person name="Butler R."/>
            <person name="Shelling A.N."/>
            <person name="Hanby A.M."/>
            <person name="Poulsom R."/>
            <person name="Ganesan T.S."/>
        </authorList>
    </citation>
    <scope>NUCLEOTIDE SEQUENCE [MRNA] (ISOFORM 2)</scope>
    <scope>TISSUE SPECIFICITY</scope>
    <source>
        <tissue>Ovary</tissue>
    </source>
</reference>
<reference key="4">
    <citation type="journal article" date="1994" name="Oncogene">
        <title>Identification and chromosomal mapping of a receptor tyrosine kinase with a putative phospholipid binding sequence in its ectodomain.</title>
        <authorList>
            <person name="Perez J.L."/>
            <person name="Shen X."/>
            <person name="Finkernagel S."/>
            <person name="Sciorra L."/>
            <person name="Jenkins N.A."/>
            <person name="Gilbert D.J."/>
            <person name="Copeland N.G."/>
            <person name="Wong T.W."/>
        </authorList>
    </citation>
    <scope>NUCLEOTIDE SEQUENCE [MRNA] (ISOFORM 1)</scope>
    <source>
        <tissue>Fetal liver</tissue>
    </source>
</reference>
<reference key="5">
    <citation type="journal article" date="1996" name="FEBS Lett.">
        <title>Receptor protein tyrosine kinase DDR is up-regulated by p53 protein.</title>
        <authorList>
            <person name="Sakuma S."/>
            <person name="Tada M."/>
            <person name="Saya H."/>
            <person name="Sawamura Y."/>
            <person name="Shinohe Y."/>
            <person name="Abe H."/>
        </authorList>
    </citation>
    <scope>NUCLEOTIDE SEQUENCE [GENOMIC DNA]</scope>
    <scope>VARIANT VAL-833</scope>
</reference>
<reference key="6">
    <citation type="journal article" date="1996" name="Genome Res.">
        <title>The genomic structure of discoidin receptor tyrosine kinase.</title>
        <authorList>
            <person name="Playford M.P."/>
            <person name="Butler R.J."/>
            <person name="Wang X.C."/>
            <person name="Katso R.M."/>
            <person name="Cooke I.E."/>
            <person name="Ganesan T.S."/>
        </authorList>
    </citation>
    <scope>NUCLEOTIDE SEQUENCE [GENOMIC DNA]</scope>
</reference>
<reference key="7">
    <citation type="journal article" date="1996" name="Oncogene">
        <title>Identification of two isoforms of the Cak receptor kinase that are coexpressed in breast tumor cell lines.</title>
        <authorList>
            <person name="Perez J.L."/>
            <person name="Jing S.Q."/>
            <person name="Wong T.W."/>
        </authorList>
    </citation>
    <scope>NUCLEOTIDE SEQUENCE [MRNA] (ISOFORM 2)</scope>
    <source>
        <tissue>Lung</tissue>
    </source>
</reference>
<reference key="8">
    <citation type="journal article" date="2008" name="Arthritis Res. Ther.">
        <title>Novel splice variants derived from the receptor tyrosine kinase superfamily are potential therapeutics for rheumatoid arthritis.</title>
        <authorList>
            <person name="Jin P."/>
            <person name="Zhang J."/>
            <person name="Sumariwalla P.F."/>
            <person name="Ni I."/>
            <person name="Jorgensen B."/>
            <person name="Crawford D."/>
            <person name="Phillips S."/>
            <person name="Feldmann M."/>
            <person name="Shepard H.M."/>
            <person name="Paleolog E.M."/>
        </authorList>
    </citation>
    <scope>NUCLEOTIDE SEQUENCE [MRNA] (ISOFORM 3)</scope>
    <scope>NUCLEOTIDE SEQUENCE [MRNA] OF 1-286 (ISOFORMS 1/2/4)</scope>
</reference>
<reference key="9">
    <citation type="journal article" date="2004" name="Nat. Genet.">
        <title>Complete sequencing and characterization of 21,243 full-length human cDNAs.</title>
        <authorList>
            <person name="Ota T."/>
            <person name="Suzuki Y."/>
            <person name="Nishikawa T."/>
            <person name="Otsuki T."/>
            <person name="Sugiyama T."/>
            <person name="Irie R."/>
            <person name="Wakamatsu A."/>
            <person name="Hayashi K."/>
            <person name="Sato H."/>
            <person name="Nagai K."/>
            <person name="Kimura K."/>
            <person name="Makita H."/>
            <person name="Sekine M."/>
            <person name="Obayashi M."/>
            <person name="Nishi T."/>
            <person name="Shibahara T."/>
            <person name="Tanaka T."/>
            <person name="Ishii S."/>
            <person name="Yamamoto J."/>
            <person name="Saito K."/>
            <person name="Kawai Y."/>
            <person name="Isono Y."/>
            <person name="Nakamura Y."/>
            <person name="Nagahari K."/>
            <person name="Murakami K."/>
            <person name="Yasuda T."/>
            <person name="Iwayanagi T."/>
            <person name="Wagatsuma M."/>
            <person name="Shiratori A."/>
            <person name="Sudo H."/>
            <person name="Hosoiri T."/>
            <person name="Kaku Y."/>
            <person name="Kodaira H."/>
            <person name="Kondo H."/>
            <person name="Sugawara M."/>
            <person name="Takahashi M."/>
            <person name="Kanda K."/>
            <person name="Yokoi T."/>
            <person name="Furuya T."/>
            <person name="Kikkawa E."/>
            <person name="Omura Y."/>
            <person name="Abe K."/>
            <person name="Kamihara K."/>
            <person name="Katsuta N."/>
            <person name="Sato K."/>
            <person name="Tanikawa M."/>
            <person name="Yamazaki M."/>
            <person name="Ninomiya K."/>
            <person name="Ishibashi T."/>
            <person name="Yamashita H."/>
            <person name="Murakawa K."/>
            <person name="Fujimori K."/>
            <person name="Tanai H."/>
            <person name="Kimata M."/>
            <person name="Watanabe M."/>
            <person name="Hiraoka S."/>
            <person name="Chiba Y."/>
            <person name="Ishida S."/>
            <person name="Ono Y."/>
            <person name="Takiguchi S."/>
            <person name="Watanabe S."/>
            <person name="Yosida M."/>
            <person name="Hotuta T."/>
            <person name="Kusano J."/>
            <person name="Kanehori K."/>
            <person name="Takahashi-Fujii A."/>
            <person name="Hara H."/>
            <person name="Tanase T.-O."/>
            <person name="Nomura Y."/>
            <person name="Togiya S."/>
            <person name="Komai F."/>
            <person name="Hara R."/>
            <person name="Takeuchi K."/>
            <person name="Arita M."/>
            <person name="Imose N."/>
            <person name="Musashino K."/>
            <person name="Yuuki H."/>
            <person name="Oshima A."/>
            <person name="Sasaki N."/>
            <person name="Aotsuka S."/>
            <person name="Yoshikawa Y."/>
            <person name="Matsunawa H."/>
            <person name="Ichihara T."/>
            <person name="Shiohata N."/>
            <person name="Sano S."/>
            <person name="Moriya S."/>
            <person name="Momiyama H."/>
            <person name="Satoh N."/>
            <person name="Takami S."/>
            <person name="Terashima Y."/>
            <person name="Suzuki O."/>
            <person name="Nakagawa S."/>
            <person name="Senoh A."/>
            <person name="Mizoguchi H."/>
            <person name="Goto Y."/>
            <person name="Shimizu F."/>
            <person name="Wakebe H."/>
            <person name="Hishigaki H."/>
            <person name="Watanabe T."/>
            <person name="Sugiyama A."/>
            <person name="Takemoto M."/>
            <person name="Kawakami B."/>
            <person name="Yamazaki M."/>
            <person name="Watanabe K."/>
            <person name="Kumagai A."/>
            <person name="Itakura S."/>
            <person name="Fukuzumi Y."/>
            <person name="Fujimori Y."/>
            <person name="Komiyama M."/>
            <person name="Tashiro H."/>
            <person name="Tanigami A."/>
            <person name="Fujiwara T."/>
            <person name="Ono T."/>
            <person name="Yamada K."/>
            <person name="Fujii Y."/>
            <person name="Ozaki K."/>
            <person name="Hirao M."/>
            <person name="Ohmori Y."/>
            <person name="Kawabata A."/>
            <person name="Hikiji T."/>
            <person name="Kobatake N."/>
            <person name="Inagaki H."/>
            <person name="Ikema Y."/>
            <person name="Okamoto S."/>
            <person name="Okitani R."/>
            <person name="Kawakami T."/>
            <person name="Noguchi S."/>
            <person name="Itoh T."/>
            <person name="Shigeta K."/>
            <person name="Senba T."/>
            <person name="Matsumura K."/>
            <person name="Nakajima Y."/>
            <person name="Mizuno T."/>
            <person name="Morinaga M."/>
            <person name="Sasaki M."/>
            <person name="Togashi T."/>
            <person name="Oyama M."/>
            <person name="Hata H."/>
            <person name="Watanabe M."/>
            <person name="Komatsu T."/>
            <person name="Mizushima-Sugano J."/>
            <person name="Satoh T."/>
            <person name="Shirai Y."/>
            <person name="Takahashi Y."/>
            <person name="Nakagawa K."/>
            <person name="Okumura K."/>
            <person name="Nagase T."/>
            <person name="Nomura N."/>
            <person name="Kikuchi H."/>
            <person name="Masuho Y."/>
            <person name="Yamashita R."/>
            <person name="Nakai K."/>
            <person name="Yada T."/>
            <person name="Nakamura Y."/>
            <person name="Ohara O."/>
            <person name="Isogai T."/>
            <person name="Sugano S."/>
        </authorList>
    </citation>
    <scope>NUCLEOTIDE SEQUENCE [LARGE SCALE MRNA] (ISOFORMS 2 AND 5)</scope>
    <source>
        <tissue>Brain</tissue>
        <tissue>Placenta</tissue>
    </source>
</reference>
<reference key="10">
    <citation type="submission" date="2005-03" db="EMBL/GenBank/DDBJ databases">
        <title>Preparation of a set of expression-ready clones of mammalian long cDNAs encoding large proteins by the ORF trap cloning method.</title>
        <authorList>
            <person name="Nakajima D."/>
            <person name="Saito K."/>
            <person name="Yamakawa H."/>
            <person name="Kikuno R.F."/>
            <person name="Nakayama M."/>
            <person name="Ohara R."/>
            <person name="Okazaki N."/>
            <person name="Koga H."/>
            <person name="Nagase T."/>
            <person name="Ohara O."/>
        </authorList>
    </citation>
    <scope>NUCLEOTIDE SEQUENCE [LARGE SCALE MRNA] (ISOFORM 2)</scope>
    <source>
        <tissue>Brain</tissue>
    </source>
</reference>
<reference key="11">
    <citation type="journal article" date="2006" name="Genetics">
        <title>Rapid evolution of major histocompatibility complex class I genes in primates generates new disease alleles in humans via hitchhiking diversity.</title>
        <authorList>
            <person name="Shiina T."/>
            <person name="Ota M."/>
            <person name="Shimizu S."/>
            <person name="Katsuyama Y."/>
            <person name="Hashimoto N."/>
            <person name="Takasu M."/>
            <person name="Anzai T."/>
            <person name="Kulski J.K."/>
            <person name="Kikkawa E."/>
            <person name="Naruse T."/>
            <person name="Kimura N."/>
            <person name="Yanagiya K."/>
            <person name="Watanabe A."/>
            <person name="Hosomichi K."/>
            <person name="Kohara S."/>
            <person name="Iwamoto C."/>
            <person name="Umehara Y."/>
            <person name="Meyer A."/>
            <person name="Wanner V."/>
            <person name="Sano K."/>
            <person name="Macquin C."/>
            <person name="Ikeo K."/>
            <person name="Tokunaga K."/>
            <person name="Gojobori T."/>
            <person name="Inoko H."/>
            <person name="Bahram S."/>
        </authorList>
    </citation>
    <scope>NUCLEOTIDE SEQUENCE [LARGE SCALE GENOMIC DNA]</scope>
    <source>
        <tissue>Peripheral blood leukocyte</tissue>
    </source>
</reference>
<reference key="12">
    <citation type="journal article" date="2003" name="Nature">
        <title>The DNA sequence and analysis of human chromosome 6.</title>
        <authorList>
            <person name="Mungall A.J."/>
            <person name="Palmer S.A."/>
            <person name="Sims S.K."/>
            <person name="Edwards C.A."/>
            <person name="Ashurst J.L."/>
            <person name="Wilming L."/>
            <person name="Jones M.C."/>
            <person name="Horton R."/>
            <person name="Hunt S.E."/>
            <person name="Scott C.E."/>
            <person name="Gilbert J.G.R."/>
            <person name="Clamp M.E."/>
            <person name="Bethel G."/>
            <person name="Milne S."/>
            <person name="Ainscough R."/>
            <person name="Almeida J.P."/>
            <person name="Ambrose K.D."/>
            <person name="Andrews T.D."/>
            <person name="Ashwell R.I.S."/>
            <person name="Babbage A.K."/>
            <person name="Bagguley C.L."/>
            <person name="Bailey J."/>
            <person name="Banerjee R."/>
            <person name="Barker D.J."/>
            <person name="Barlow K.F."/>
            <person name="Bates K."/>
            <person name="Beare D.M."/>
            <person name="Beasley H."/>
            <person name="Beasley O."/>
            <person name="Bird C.P."/>
            <person name="Blakey S.E."/>
            <person name="Bray-Allen S."/>
            <person name="Brook J."/>
            <person name="Brown A.J."/>
            <person name="Brown J.Y."/>
            <person name="Burford D.C."/>
            <person name="Burrill W."/>
            <person name="Burton J."/>
            <person name="Carder C."/>
            <person name="Carter N.P."/>
            <person name="Chapman J.C."/>
            <person name="Clark S.Y."/>
            <person name="Clark G."/>
            <person name="Clee C.M."/>
            <person name="Clegg S."/>
            <person name="Cobley V."/>
            <person name="Collier R.E."/>
            <person name="Collins J.E."/>
            <person name="Colman L.K."/>
            <person name="Corby N.R."/>
            <person name="Coville G.J."/>
            <person name="Culley K.M."/>
            <person name="Dhami P."/>
            <person name="Davies J."/>
            <person name="Dunn M."/>
            <person name="Earthrowl M.E."/>
            <person name="Ellington A.E."/>
            <person name="Evans K.A."/>
            <person name="Faulkner L."/>
            <person name="Francis M.D."/>
            <person name="Frankish A."/>
            <person name="Frankland J."/>
            <person name="French L."/>
            <person name="Garner P."/>
            <person name="Garnett J."/>
            <person name="Ghori M.J."/>
            <person name="Gilby L.M."/>
            <person name="Gillson C.J."/>
            <person name="Glithero R.J."/>
            <person name="Grafham D.V."/>
            <person name="Grant M."/>
            <person name="Gribble S."/>
            <person name="Griffiths C."/>
            <person name="Griffiths M.N.D."/>
            <person name="Hall R."/>
            <person name="Halls K.S."/>
            <person name="Hammond S."/>
            <person name="Harley J.L."/>
            <person name="Hart E.A."/>
            <person name="Heath P.D."/>
            <person name="Heathcott R."/>
            <person name="Holmes S.J."/>
            <person name="Howden P.J."/>
            <person name="Howe K.L."/>
            <person name="Howell G.R."/>
            <person name="Huckle E."/>
            <person name="Humphray S.J."/>
            <person name="Humphries M.D."/>
            <person name="Hunt A.R."/>
            <person name="Johnson C.M."/>
            <person name="Joy A.A."/>
            <person name="Kay M."/>
            <person name="Keenan S.J."/>
            <person name="Kimberley A.M."/>
            <person name="King A."/>
            <person name="Laird G.K."/>
            <person name="Langford C."/>
            <person name="Lawlor S."/>
            <person name="Leongamornlert D.A."/>
            <person name="Leversha M."/>
            <person name="Lloyd C.R."/>
            <person name="Lloyd D.M."/>
            <person name="Loveland J.E."/>
            <person name="Lovell J."/>
            <person name="Martin S."/>
            <person name="Mashreghi-Mohammadi M."/>
            <person name="Maslen G.L."/>
            <person name="Matthews L."/>
            <person name="McCann O.T."/>
            <person name="McLaren S.J."/>
            <person name="McLay K."/>
            <person name="McMurray A."/>
            <person name="Moore M.J.F."/>
            <person name="Mullikin J.C."/>
            <person name="Niblett D."/>
            <person name="Nickerson T."/>
            <person name="Novik K.L."/>
            <person name="Oliver K."/>
            <person name="Overton-Larty E.K."/>
            <person name="Parker A."/>
            <person name="Patel R."/>
            <person name="Pearce A.V."/>
            <person name="Peck A.I."/>
            <person name="Phillimore B.J.C.T."/>
            <person name="Phillips S."/>
            <person name="Plumb R.W."/>
            <person name="Porter K.M."/>
            <person name="Ramsey Y."/>
            <person name="Ranby S.A."/>
            <person name="Rice C.M."/>
            <person name="Ross M.T."/>
            <person name="Searle S.M."/>
            <person name="Sehra H.K."/>
            <person name="Sheridan E."/>
            <person name="Skuce C.D."/>
            <person name="Smith S."/>
            <person name="Smith M."/>
            <person name="Spraggon L."/>
            <person name="Squares S.L."/>
            <person name="Steward C.A."/>
            <person name="Sycamore N."/>
            <person name="Tamlyn-Hall G."/>
            <person name="Tester J."/>
            <person name="Theaker A.J."/>
            <person name="Thomas D.W."/>
            <person name="Thorpe A."/>
            <person name="Tracey A."/>
            <person name="Tromans A."/>
            <person name="Tubby B."/>
            <person name="Wall M."/>
            <person name="Wallis J.M."/>
            <person name="West A.P."/>
            <person name="White S.S."/>
            <person name="Whitehead S.L."/>
            <person name="Whittaker H."/>
            <person name="Wild A."/>
            <person name="Willey D.J."/>
            <person name="Wilmer T.E."/>
            <person name="Wood J.M."/>
            <person name="Wray P.W."/>
            <person name="Wyatt J.C."/>
            <person name="Young L."/>
            <person name="Younger R.M."/>
            <person name="Bentley D.R."/>
            <person name="Coulson A."/>
            <person name="Durbin R.M."/>
            <person name="Hubbard T."/>
            <person name="Sulston J.E."/>
            <person name="Dunham I."/>
            <person name="Rogers J."/>
            <person name="Beck S."/>
        </authorList>
    </citation>
    <scope>NUCLEOTIDE SEQUENCE [LARGE SCALE GENOMIC DNA]</scope>
</reference>
<reference key="13">
    <citation type="submission" date="2005-07" db="EMBL/GenBank/DDBJ databases">
        <authorList>
            <person name="Mural R.J."/>
            <person name="Istrail S."/>
            <person name="Sutton G.G."/>
            <person name="Florea L."/>
            <person name="Halpern A.L."/>
            <person name="Mobarry C.M."/>
            <person name="Lippert R."/>
            <person name="Walenz B."/>
            <person name="Shatkay H."/>
            <person name="Dew I."/>
            <person name="Miller J.R."/>
            <person name="Flanigan M.J."/>
            <person name="Edwards N.J."/>
            <person name="Bolanos R."/>
            <person name="Fasulo D."/>
            <person name="Halldorsson B.V."/>
            <person name="Hannenhalli S."/>
            <person name="Turner R."/>
            <person name="Yooseph S."/>
            <person name="Lu F."/>
            <person name="Nusskern D.R."/>
            <person name="Shue B.C."/>
            <person name="Zheng X.H."/>
            <person name="Zhong F."/>
            <person name="Delcher A.L."/>
            <person name="Huson D.H."/>
            <person name="Kravitz S.A."/>
            <person name="Mouchard L."/>
            <person name="Reinert K."/>
            <person name="Remington K.A."/>
            <person name="Clark A.G."/>
            <person name="Waterman M.S."/>
            <person name="Eichler E.E."/>
            <person name="Adams M.D."/>
            <person name="Hunkapiller M.W."/>
            <person name="Myers E.W."/>
            <person name="Venter J.C."/>
        </authorList>
    </citation>
    <scope>NUCLEOTIDE SEQUENCE [LARGE SCALE GENOMIC DNA]</scope>
</reference>
<reference key="14">
    <citation type="journal article" date="2004" name="Genome Res.">
        <title>The status, quality, and expansion of the NIH full-length cDNA project: the Mammalian Gene Collection (MGC).</title>
        <authorList>
            <consortium name="The MGC Project Team"/>
        </authorList>
    </citation>
    <scope>NUCLEOTIDE SEQUENCE [LARGE SCALE MRNA] (ISOFORM 2)</scope>
    <source>
        <tissue>Brain</tissue>
        <tissue>Muscle</tissue>
    </source>
</reference>
<reference key="15">
    <citation type="journal article" date="2014" name="J. Biol. Chem.">
        <title>Glycosylation at Asn211 regulates the activation state of the discoidin domain receptor 1 (DDR1).</title>
        <authorList>
            <person name="Fu H.L."/>
            <person name="Valiathan R.R."/>
            <person name="Payne L."/>
            <person name="Kumarasiri M."/>
            <person name="Mahasenan K.V."/>
            <person name="Mobashery S."/>
            <person name="Huang P."/>
            <person name="Fridman R."/>
        </authorList>
    </citation>
    <scope>PROTEIN SEQUENCE OF 480-490; 515-525 AND 790-798</scope>
    <scope>IDENTIFICATION BY MASS SPECTROMETRY</scope>
    <scope>SUBUNIT</scope>
    <scope>SUBCELLULAR LOCATION</scope>
    <scope>PHOSPHORYLATION AT TYR-484; TYR-513; TYR-520; TYR-792; TYR-796 AND TYR-797</scope>
    <scope>GLYCOSYLATION AT ASN-211 AND ASN-260</scope>
    <scope>MUTAGENESIS OF ARG-105; ASN-211; SER-213; ASN-260; ASN-371; THR-379; THR-393; ASN-394 AND LYS-655</scope>
</reference>
<reference key="16">
    <citation type="journal article" date="1995" name="Oncogene">
        <title>Distinct structural characteristics of discoidin I subfamily receptor tyrosine kinases and complementary expression in human cancer.</title>
        <authorList>
            <person name="Alves F."/>
            <person name="Vogel W."/>
            <person name="Mossie K."/>
            <person name="Millauer B."/>
            <person name="Hoefler H."/>
            <person name="Ullrich A."/>
        </authorList>
    </citation>
    <scope>NUCLEOTIDE SEQUENCE [MRNA] OF 501-550 (ISOFORMS 1/4)</scope>
    <scope>NUCLEOTIDE SEQUENCE [MRNA] OF 501-550 AND 651-694 (ISOFORM 2)</scope>
    <scope>NUCLEOTIDE SEQUENCE [MRNA] OF 651-694 (ISOFORM 4)</scope>
    <scope>ALTERNATIVE SPLICING</scope>
    <scope>TISSUE SPECIFICITY</scope>
    <source>
        <tissue>Mammary carcinoma</tissue>
    </source>
</reference>
<reference key="17">
    <citation type="journal article" date="1994" name="Ann. Surg. Oncol.">
        <title>Expression of growth factor receptors, the focal adhesion kinase, and other tyrosine kinases in human soft tissue tumors.</title>
        <authorList>
            <person name="Weiner T.M."/>
            <person name="Liu E.T."/>
            <person name="Craven R.J."/>
            <person name="Cance W.G."/>
        </authorList>
    </citation>
    <scope>NUCLEOTIDE SEQUENCE [MRNA] OF 771-824 (ISOFORMS 1/2/4)</scope>
</reference>
<reference key="18">
    <citation type="journal article" date="1993" name="Oncogene">
        <title>A survey of protein tyrosine kinase mRNAs expressed in normal human melanocytes.</title>
        <authorList>
            <person name="Lee S.-T."/>
            <person name="Strunk K.M."/>
            <person name="Spritz R.A."/>
        </authorList>
    </citation>
    <scope>NUCLEOTIDE SEQUENCE [MRNA] OF 772-823 (ISOFORMS 1/2/4)</scope>
    <scope>TISSUE SPECIFICITY</scope>
    <source>
        <tissue>Melanocyte</tissue>
    </source>
</reference>
<reference key="19">
    <citation type="journal article" date="1997" name="Mol. Cell">
        <title>The discoidin domain receptor tyrosine kinases are activated by collagen.</title>
        <authorList>
            <person name="Vogel W."/>
            <person name="Gish G.D."/>
            <person name="Alves F."/>
            <person name="Pawson T."/>
        </authorList>
    </citation>
    <scope>FUNCTION AS COLLAGEN RECEPTOR</scope>
    <scope>PHOSPHORYLATION AT TYR-513</scope>
    <scope>INTERACTION WITH SHC1</scope>
    <scope>AUTOPHOSPHORYLATION</scope>
    <scope>SUBCELLULAR LOCATION</scope>
</reference>
<reference key="20">
    <citation type="journal article" date="2002" name="Circ. Res.">
        <title>Tyrosine kinase activity of discoidin domain receptor 1 is necessary for smooth muscle cell migration and matrix metalloproteinase expression.</title>
        <authorList>
            <person name="Hou G."/>
            <person name="Vogel W.F."/>
            <person name="Bendeck M.P."/>
        </authorList>
    </citation>
    <scope>FUNCTION</scope>
</reference>
<reference key="21">
    <citation type="journal article" date="2006" name="FEBS Lett.">
        <title>Pinpointing phosphotyrosine-dependent interactions downstream of the collagen receptor DDR1.</title>
        <authorList>
            <person name="Koo D.H."/>
            <person name="McFadden C."/>
            <person name="Huang Y."/>
            <person name="Abdulhussein R."/>
            <person name="Friese-Hamim M."/>
            <person name="Vogel W.F."/>
        </authorList>
    </citation>
    <scope>FUNCTION</scope>
    <scope>INTERACTION WITH PTPN11 AND NCK2</scope>
    <scope>PHOSPHORYLATION AT TYR-740</scope>
    <scope>MUTAGENESIS OF TYR-740</scope>
</reference>
<reference key="22">
    <citation type="journal article" date="2006" name="J. Neurooncol.">
        <title>Discoidin domain receptor-1a (DDR1a) promotes glioma cell invasion and adhesion in association with matrix metalloproteinase-2.</title>
        <authorList>
            <person name="Ram R."/>
            <person name="Lorente G."/>
            <person name="Nikolich K."/>
            <person name="Urfer R."/>
            <person name="Foehr E."/>
            <person name="Nagavarapu U."/>
        </authorList>
    </citation>
    <scope>FUNCTION</scope>
</reference>
<reference key="23">
    <citation type="journal article" date="2008" name="Biochim. Biophys. Acta">
        <title>KIBRA interacts with discoidin domain receptor 1 to modulate collagen-induced signalling.</title>
        <authorList>
            <person name="Hilton H.N."/>
            <person name="Stanford P.M."/>
            <person name="Harris J."/>
            <person name="Oakes S.R."/>
            <person name="Kaplan W."/>
            <person name="Daly R.J."/>
            <person name="Ormandy C.J."/>
        </authorList>
    </citation>
    <scope>INTERACTION WITH WWC1 AND PRKCZ</scope>
</reference>
<reference key="24">
    <citation type="journal article" date="2009" name="J. Cell Sci.">
        <title>The collagen receptor DDR1 regulates cell spreading and motility by associating with myosin IIA.</title>
        <authorList>
            <person name="Huang Y."/>
            <person name="Arora P."/>
            <person name="McCulloch C.A."/>
            <person name="Vogel W.F."/>
        </authorList>
    </citation>
    <scope>FUNCTION</scope>
    <scope>SUBCELLULAR LOCATION</scope>
    <scope>AUTOPHOSPHORYLATION</scope>
    <scope>INTERACTION WITH MYH9</scope>
</reference>
<reference key="25">
    <citation type="journal article" date="2009" name="Mol. Cell. Proteomics">
        <title>Large-scale proteomics analysis of the human kinome.</title>
        <authorList>
            <person name="Oppermann F.S."/>
            <person name="Gnad F."/>
            <person name="Olsen J.V."/>
            <person name="Hornberger R."/>
            <person name="Greff Z."/>
            <person name="Keri G."/>
            <person name="Mann M."/>
            <person name="Daub H."/>
        </authorList>
    </citation>
    <scope>PHOSPHORYLATION [LARGE SCALE ANALYSIS] AT SER-631</scope>
    <scope>IDENTIFICATION BY MASS SPECTROMETRY [LARGE SCALE ANALYSIS]</scope>
</reference>
<reference key="26">
    <citation type="journal article" date="2010" name="J. Cell. Physiol.">
        <title>DDR1 regulates the stabilization of cell surface E-cadherin and E-cadherin-mediated cell aggregation.</title>
        <authorList>
            <person name="Eswaramoorthy R."/>
            <person name="Wang C.K."/>
            <person name="Chen W.C."/>
            <person name="Tang M.J."/>
            <person name="Ho M.L."/>
            <person name="Hwang C.C."/>
            <person name="Wang H.M."/>
            <person name="Wang C.Z."/>
        </authorList>
    </citation>
    <scope>FUNCTION</scope>
    <scope>INTERACTION WITH CDH1</scope>
</reference>
<reference key="27">
    <citation type="journal article" date="2011" name="Cardiovasc. Pathol.">
        <title>Collagen stimulates discoidin domain receptor 1-mediated migration of smooth muscle cells through Src.</title>
        <authorList>
            <person name="Lu K.K."/>
            <person name="Trcka D."/>
            <person name="Bendeck M.P."/>
        </authorList>
    </citation>
    <scope>FUNCTION</scope>
    <scope>INTERACTION WITH SRC</scope>
</reference>
<reference key="28">
    <citation type="journal article" date="2011" name="Eur. Respir. J.">
        <title>Discoidin domain receptor 1 regulates bronchial epithelial repair and matrix metalloproteinase production.</title>
        <authorList>
            <person name="Roberts M.E."/>
            <person name="Magowan L."/>
            <person name="Hall I.P."/>
            <person name="Johnson S.R."/>
        </authorList>
    </citation>
    <scope>FUNCTION</scope>
</reference>
<reference key="29">
    <citation type="journal article" date="2011" name="Matrix Biol.">
        <title>Collagen binding specificity of the discoidin domain receptors: binding sites on collagens II and III and molecular determinants for collagen IV recognition by DDR1.</title>
        <authorList>
            <person name="Xu H."/>
            <person name="Raynal N."/>
            <person name="Stathopoulos S."/>
            <person name="Myllyharju J."/>
            <person name="Farndale R.W."/>
            <person name="Leitinger B."/>
        </authorList>
    </citation>
    <scope>FUNCTION AS COLLAGEN RECEPTOR</scope>
    <scope>AUTOPHOSPHORYLATION</scope>
</reference>
<reference key="30">
    <citation type="journal article" date="2012" name="Structure">
        <title>Structure of the discoidin domain receptor 1 extracellular region bound to an inhibitory Fab fragment reveals features important for signaling.</title>
        <authorList>
            <person name="Carafoli F."/>
            <person name="Mayer M.C."/>
            <person name="Shiraishi K."/>
            <person name="Pecheva M.A."/>
            <person name="Chan L.Y."/>
            <person name="Nan R."/>
            <person name="Leitinger B."/>
            <person name="Hohenester E."/>
        </authorList>
    </citation>
    <scope>X-RAY CRYSTALLOGRAPHY (2.8 ANGSTROMS) OF 29-367 IN COMPLEX WITH INHIBITORY ANTIBODY</scope>
    <scope>SUBUNIT</scope>
    <scope>CALCIUM-BINDING SITES</scope>
    <scope>GLYCOSYLATION AT ASN-211 AND ASN-260</scope>
    <scope>DISULFIDE BONDS</scope>
</reference>
<reference key="31">
    <citation type="journal article" date="2013" name="ACS Chem. Biol.">
        <title>Discovery of a potent and selective DDR1 receptor tyrosine kinase inhibitor.</title>
        <authorList>
            <person name="Kim H.G."/>
            <person name="Tan L."/>
            <person name="Weisberg E.L."/>
            <person name="Liu F."/>
            <person name="Canning P."/>
            <person name="Choi H.G."/>
            <person name="Ezell S.A."/>
            <person name="Wu H."/>
            <person name="Zhao Z."/>
            <person name="Wang J."/>
            <person name="Mandinova A."/>
            <person name="Griffin J.D."/>
            <person name="Bullock A.N."/>
            <person name="Liu Q."/>
            <person name="Lee S.W."/>
            <person name="Gray N.S."/>
        </authorList>
    </citation>
    <scope>X-RAY CRYSTALLOGRAPHY (2.20 ANGSTROMS) OF 601-913 IN COMPLEX WITH INHIBITOR</scope>
    <scope>AUTOPHOSPHORYLATION</scope>
    <scope>MUTAGENESIS OF GLY-707</scope>
</reference>
<reference key="32">
    <citation type="journal article" date="2014" name="J. Mol. Biol.">
        <title>Structural mechanisms determining inhibition of the collagen receptor DDR1 by selective and multi-targeted type II kinase inhibitors.</title>
        <authorList>
            <person name="Canning P."/>
            <person name="Tan L."/>
            <person name="Chu K."/>
            <person name="Lee S.W."/>
            <person name="Gray N.S."/>
            <person name="Bullock A.N."/>
        </authorList>
    </citation>
    <scope>X-RAY CRYSTALLOGRAPHY (1.70 ANGSTROMS) OF 601-913 IN COMPLEXES WITH INHIBITORS IMATINIB AND PONATINIB</scope>
    <scope>ACTIVITY REGULATION</scope>
    <scope>AUTOPHOSPHORYLATION</scope>
</reference>
<reference key="33">
    <citation type="journal article" date="2007" name="Nature">
        <title>Patterns of somatic mutation in human cancer genomes.</title>
        <authorList>
            <person name="Greenman C."/>
            <person name="Stephens P."/>
            <person name="Smith R."/>
            <person name="Dalgliesh G.L."/>
            <person name="Hunter C."/>
            <person name="Bignell G."/>
            <person name="Davies H."/>
            <person name="Teague J."/>
            <person name="Butler A."/>
            <person name="Stevens C."/>
            <person name="Edkins S."/>
            <person name="O'Meara S."/>
            <person name="Vastrik I."/>
            <person name="Schmidt E.E."/>
            <person name="Avis T."/>
            <person name="Barthorpe S."/>
            <person name="Bhamra G."/>
            <person name="Buck G."/>
            <person name="Choudhury B."/>
            <person name="Clements J."/>
            <person name="Cole J."/>
            <person name="Dicks E."/>
            <person name="Forbes S."/>
            <person name="Gray K."/>
            <person name="Halliday K."/>
            <person name="Harrison R."/>
            <person name="Hills K."/>
            <person name="Hinton J."/>
            <person name="Jenkinson A."/>
            <person name="Jones D."/>
            <person name="Menzies A."/>
            <person name="Mironenko T."/>
            <person name="Perry J."/>
            <person name="Raine K."/>
            <person name="Richardson D."/>
            <person name="Shepherd R."/>
            <person name="Small A."/>
            <person name="Tofts C."/>
            <person name="Varian J."/>
            <person name="Webb T."/>
            <person name="West S."/>
            <person name="Widaa S."/>
            <person name="Yates A."/>
            <person name="Cahill D.P."/>
            <person name="Louis D.N."/>
            <person name="Goldstraw P."/>
            <person name="Nicholson A.G."/>
            <person name="Brasseur F."/>
            <person name="Looijenga L."/>
            <person name="Weber B.L."/>
            <person name="Chiew Y.-E."/>
            <person name="DeFazio A."/>
            <person name="Greaves M.F."/>
            <person name="Green A.R."/>
            <person name="Campbell P."/>
            <person name="Birney E."/>
            <person name="Easton D.F."/>
            <person name="Chenevix-Trench G."/>
            <person name="Tan M.-H."/>
            <person name="Khoo S.K."/>
            <person name="Teh B.T."/>
            <person name="Yuen S.T."/>
            <person name="Leung S.Y."/>
            <person name="Wooster R."/>
            <person name="Futreal P.A."/>
            <person name="Stratton M.R."/>
        </authorList>
    </citation>
    <scope>VARIANTS [LARGE SCALE ANALYSIS] GLY-17; ALA-100; GLN-169; ASP-170; TRP-306 AND ALA-496</scope>
</reference>
<gene>
    <name type="primary">DDR1</name>
    <name type="synonym">CAK</name>
    <name type="synonym">EDDR1</name>
    <name type="synonym">NEP</name>
    <name type="synonym">NTRK4</name>
    <name type="synonym">PTK3A</name>
    <name type="synonym">RTK6</name>
    <name type="synonym">TRKE</name>
</gene>
<comment type="function">
    <text evidence="1 7 8 9 12 13 14 15 16 26">Tyrosine kinase that functions as a cell surface receptor for fibrillar collagen and regulates cell attachment to the extracellular matrix, remodeling of the extracellular matrix, cell migration, differentiation, survival and cell proliferation. Collagen binding triggers a signaling pathway that involves SRC and leads to the activation of MAP kinases. Regulates remodeling of the extracellular matrix by up-regulation of the matrix metalloproteinases MMP2, MMP7 and MMP9, and thereby facilitates cell migration and wound healing. Required for normal blastocyst implantation during pregnancy, for normal mammary gland differentiation and normal lactation. Required for normal ear morphology and normal hearing (By similarity). Promotes smooth muscle cell migration, and thereby contributes to arterial wound healing. Also plays a role in tumor cell invasion. Phosphorylates PTPN11.</text>
</comment>
<comment type="catalytic activity">
    <reaction evidence="5">
        <text>L-tyrosyl-[protein] + ATP = O-phospho-L-tyrosyl-[protein] + ADP + H(+)</text>
        <dbReference type="Rhea" id="RHEA:10596"/>
        <dbReference type="Rhea" id="RHEA-COMP:10136"/>
        <dbReference type="Rhea" id="RHEA-COMP:20101"/>
        <dbReference type="ChEBI" id="CHEBI:15378"/>
        <dbReference type="ChEBI" id="CHEBI:30616"/>
        <dbReference type="ChEBI" id="CHEBI:46858"/>
        <dbReference type="ChEBI" id="CHEBI:61978"/>
        <dbReference type="ChEBI" id="CHEBI:456216"/>
        <dbReference type="EC" id="2.7.10.1"/>
    </reaction>
</comment>
<comment type="activity regulation">
    <text evidence="20">Inhibited by the multi-targeted cancer drugs imatinib and ponatinib.</text>
</comment>
<comment type="subunit">
    <text evidence="9 11 12 13 14 17 18 19 26">Homodimer. Interacts (via PPxY motif) with WWC1 (via WW domains) in a collagen-regulated manner. Forms a tripartite complex with WWC1 and PRKCZ, but predominantly in the absence of collagen. Interacts (tyrosine phosphorylated) with SHC1. Interacts with SRC. Interacts with MYH9. Interacts with CDH1. Interacts with PTPN11. Interacts with NCK2.</text>
</comment>
<comment type="interaction">
    <interactant intactId="EBI-711879">
        <id>Q08345</id>
    </interactant>
    <interactant intactId="EBI-1381484">
        <id>Q16832</id>
        <label>DDR2</label>
    </interactant>
    <organismsDiffer>false</organismsDiffer>
    <experiments>3</experiments>
</comment>
<comment type="interaction">
    <interactant intactId="EBI-711879">
        <id>Q08345</id>
    </interactant>
    <interactant intactId="EBI-713635">
        <id>O43639</id>
        <label>NCK2</label>
    </interactant>
    <organismsDiffer>false</organismsDiffer>
    <experiments>3</experiments>
</comment>
<comment type="interaction">
    <interactant intactId="EBI-711879">
        <id>Q08345</id>
    </interactant>
    <interactant intactId="EBI-297779">
        <id>Q06124</id>
        <label>PTPN11</label>
    </interactant>
    <organismsDiffer>false</organismsDiffer>
    <experiments>4</experiments>
</comment>
<comment type="interaction">
    <interactant intactId="EBI-711903">
        <id>Q08345-2</id>
    </interactant>
    <interactant intactId="EBI-947187">
        <id>Q9UHD9</id>
        <label>UBQLN2</label>
    </interactant>
    <organismsDiffer>false</organismsDiffer>
    <experiments>5</experiments>
</comment>
<comment type="subcellular location">
    <molecule>Isoform 1</molecule>
    <subcellularLocation>
        <location>Cell membrane</location>
        <topology>Single-pass type I membrane protein</topology>
    </subcellularLocation>
</comment>
<comment type="subcellular location">
    <molecule>Isoform 2</molecule>
    <subcellularLocation>
        <location>Cell membrane</location>
        <topology>Single-pass type I membrane protein</topology>
    </subcellularLocation>
</comment>
<comment type="subcellular location">
    <molecule>Isoform 3</molecule>
    <subcellularLocation>
        <location evidence="35">Secreted</location>
    </subcellularLocation>
</comment>
<comment type="subcellular location">
    <molecule>Isoform 4</molecule>
    <subcellularLocation>
        <location>Cell membrane</location>
        <topology>Single-pass type I membrane protein</topology>
    </subcellularLocation>
</comment>
<comment type="alternative products">
    <event type="alternative splicing"/>
    <isoform>
        <id>Q08345-1</id>
        <name>1</name>
        <name>CAK I</name>
        <name>DDR1b</name>
        <sequence type="displayed"/>
    </isoform>
    <isoform>
        <id>Q08345-2</id>
        <name>2</name>
        <name>CAK II</name>
        <name>DDR1a</name>
        <name>Short</name>
        <sequence type="described" ref="VSP_002953"/>
    </isoform>
    <isoform>
        <id>Q08345-4</id>
        <name>3</name>
        <name>DDR1d</name>
        <sequence type="described" ref="VSP_036916 VSP_036917"/>
    </isoform>
    <isoform>
        <id>Q08345-5</id>
        <name>4</name>
        <sequence type="described" ref="VSP_038057"/>
    </isoform>
    <isoform>
        <id>Q08345-6</id>
        <name>5</name>
        <sequence type="described" ref="VSP_043582 VSP_002953"/>
    </isoform>
</comment>
<comment type="tissue specificity">
    <text evidence="21 22 23">Detected in T-47D, MDA-MB-175 and HBL-100 breast carcinoma cells, A-431 epidermoid carcinoma cells, SW48 and SNU-C2B colon carcinoma cells and Hs 294T melanoma cells (at protein level). Expressed at low levels in most adult tissues and is highest in the brain, lung, placenta and kidney. Lower levels of expression are detected in melanocytes, heart, liver, skeletal muscle and pancreas. Abundant in breast carcinoma cell lines. In the colonic mucosa, expressed in epithelia but not in the connective tissue of the lamina propria. In the thyroid gland, expressed in the epithelium of the thyroid follicles. In pancreas, expressed in the islets of Langerhans cells, but not in the surrounding epithelial cells of the exocrine pancreas. In kidney, expressed in the epithelia of the distal tubules. Not expressed in connective tissue, endothelial cells, adipose tissue, muscle cells or cells of hematopoietic origin.</text>
</comment>
<comment type="domain">
    <text>The Gly/Pro-rich domains may be required for an unusual geometry of interaction with ligand or substrates.</text>
</comment>
<comment type="PTM">
    <text>Autophosphorylated in response to fibrillar collagen binding.</text>
</comment>
<comment type="PTM">
    <text evidence="17 19">Glycosylation of Asn-211, but apparently not of Asn-260 or Asn-394, prevents autophosphorylation from occurring in the absence of collagen.</text>
</comment>
<comment type="miscellaneous">
    <molecule>Isoform 3</molecule>
    <text evidence="35">May be produced at very low levels due to a premature stop codon in the mRNA, leading to nonsense-mediated mRNA decay.</text>
</comment>
<comment type="similarity">
    <text evidence="4">Belongs to the protein kinase superfamily. Tyr protein kinase family. Insulin receptor subfamily.</text>
</comment>
<comment type="caution">
    <text evidence="37">The mutant Gln-371 studied is still likely to be glycosylated at Asn-370, but study did not include mutagenesis of Asn-370.</text>
</comment>
<comment type="sequence caution" evidence="35">
    <conflict type="erroneous termination">
        <sequence resource="EMBL-CDS" id="ACF47649"/>
    </conflict>
    <text>Truncated C-terminus.</text>
</comment>
<comment type="sequence caution" evidence="35">
    <conflict type="erroneous initiation">
        <sequence resource="EMBL-CDS" id="BAE06103"/>
    </conflict>
    <text>Extended N-terminus.</text>
</comment>
<comment type="online information" name="Atlas of Genetics and Cytogenetics in Oncology and Haematology">
    <link uri="https://atlasgeneticsoncology.org/gene/40280/DDR1"/>
</comment>
<accession>Q08345</accession>
<accession>B5A975</accession>
<accession>B5A976</accession>
<accession>B7Z2K0</accession>
<accession>Q14196</accession>
<accession>Q16562</accession>
<accession>Q2L6H3</accession>
<accession>Q4LE50</accession>
<accession>Q5ST11</accession>
<accession>Q5ST12</accession>
<accession>Q6NSK4</accession>
<accession>Q9UD35</accession>
<accession>Q9UD36</accession>
<accession>Q9UD37</accession>
<accession>Q9UD86</accession>
<accession>Q9UDL2</accession>
<dbReference type="EC" id="2.7.10.1"/>
<dbReference type="EMBL" id="X74979">
    <property type="protein sequence ID" value="CAA52915.1"/>
    <property type="molecule type" value="mRNA"/>
</dbReference>
<dbReference type="EMBL" id="L11315">
    <property type="protein sequence ID" value="AAA02866.1"/>
    <property type="molecule type" value="mRNA"/>
</dbReference>
<dbReference type="EMBL" id="Z29093">
    <property type="protein sequence ID" value="CAA82335.1"/>
    <property type="molecule type" value="mRNA"/>
</dbReference>
<dbReference type="EMBL" id="L20817">
    <property type="protein sequence ID" value="AAA18019.1"/>
    <property type="molecule type" value="mRNA"/>
</dbReference>
<dbReference type="EMBL" id="U48705">
    <property type="protein sequence ID" value="AAC50917.1"/>
    <property type="molecule type" value="Genomic_DNA"/>
</dbReference>
<dbReference type="EMBL" id="X98208">
    <property type="protein sequence ID" value="CAA66871.1"/>
    <property type="molecule type" value="Genomic_DNA"/>
</dbReference>
<dbReference type="EMBL" id="X99023">
    <property type="protein sequence ID" value="CAA66871.1"/>
    <property type="status" value="JOINED"/>
    <property type="molecule type" value="Genomic_DNA"/>
</dbReference>
<dbReference type="EMBL" id="X99024">
    <property type="protein sequence ID" value="CAA66871.1"/>
    <property type="status" value="JOINED"/>
    <property type="molecule type" value="Genomic_DNA"/>
</dbReference>
<dbReference type="EMBL" id="X99025">
    <property type="protein sequence ID" value="CAA66871.1"/>
    <property type="status" value="JOINED"/>
    <property type="molecule type" value="Genomic_DNA"/>
</dbReference>
<dbReference type="EMBL" id="X99026">
    <property type="protein sequence ID" value="CAA66871.1"/>
    <property type="status" value="JOINED"/>
    <property type="molecule type" value="Genomic_DNA"/>
</dbReference>
<dbReference type="EMBL" id="X99027">
    <property type="protein sequence ID" value="CAA66871.1"/>
    <property type="status" value="JOINED"/>
    <property type="molecule type" value="Genomic_DNA"/>
</dbReference>
<dbReference type="EMBL" id="X99028">
    <property type="protein sequence ID" value="CAA66871.1"/>
    <property type="status" value="JOINED"/>
    <property type="molecule type" value="Genomic_DNA"/>
</dbReference>
<dbReference type="EMBL" id="X99029">
    <property type="protein sequence ID" value="CAA66871.1"/>
    <property type="status" value="JOINED"/>
    <property type="molecule type" value="Genomic_DNA"/>
</dbReference>
<dbReference type="EMBL" id="X99030">
    <property type="protein sequence ID" value="CAA66871.1"/>
    <property type="status" value="JOINED"/>
    <property type="molecule type" value="Genomic_DNA"/>
</dbReference>
<dbReference type="EMBL" id="X99031">
    <property type="protein sequence ID" value="CAA66871.1"/>
    <property type="status" value="JOINED"/>
    <property type="molecule type" value="Genomic_DNA"/>
</dbReference>
<dbReference type="EMBL" id="X99032">
    <property type="protein sequence ID" value="CAA66871.1"/>
    <property type="status" value="JOINED"/>
    <property type="molecule type" value="Genomic_DNA"/>
</dbReference>
<dbReference type="EMBL" id="X99033">
    <property type="protein sequence ID" value="CAA66871.1"/>
    <property type="status" value="JOINED"/>
    <property type="molecule type" value="Genomic_DNA"/>
</dbReference>
<dbReference type="EMBL" id="X99034">
    <property type="protein sequence ID" value="CAA66871.1"/>
    <property type="status" value="JOINED"/>
    <property type="molecule type" value="Genomic_DNA"/>
</dbReference>
<dbReference type="EMBL" id="L57508">
    <property type="protein sequence ID" value="AAB05208.1"/>
    <property type="molecule type" value="mRNA"/>
</dbReference>
<dbReference type="EMBL" id="EU826613">
    <property type="protein sequence ID" value="ACF47649.1"/>
    <property type="status" value="ALT_SEQ"/>
    <property type="molecule type" value="mRNA"/>
</dbReference>
<dbReference type="EMBL" id="EU826614">
    <property type="protein sequence ID" value="ACF47650.1"/>
    <property type="molecule type" value="mRNA"/>
</dbReference>
<dbReference type="EMBL" id="AK291621">
    <property type="protein sequence ID" value="BAF84310.1"/>
    <property type="molecule type" value="mRNA"/>
</dbReference>
<dbReference type="EMBL" id="AK294793">
    <property type="protein sequence ID" value="BAH11886.1"/>
    <property type="molecule type" value="mRNA"/>
</dbReference>
<dbReference type="EMBL" id="AB210021">
    <property type="protein sequence ID" value="BAE06103.1"/>
    <property type="status" value="ALT_INIT"/>
    <property type="molecule type" value="mRNA"/>
</dbReference>
<dbReference type="EMBL" id="BA000025">
    <property type="protein sequence ID" value="BAB63318.1"/>
    <property type="molecule type" value="Genomic_DNA"/>
</dbReference>
<dbReference type="EMBL" id="CR759747">
    <property type="status" value="NOT_ANNOTATED_CDS"/>
    <property type="molecule type" value="Genomic_DNA"/>
</dbReference>
<dbReference type="EMBL" id="AB088102">
    <property type="protein sequence ID" value="BAC54935.1"/>
    <property type="molecule type" value="Genomic_DNA"/>
</dbReference>
<dbReference type="EMBL" id="AB103608">
    <property type="protein sequence ID" value="BAF31270.1"/>
    <property type="molecule type" value="Genomic_DNA"/>
</dbReference>
<dbReference type="EMBL" id="AL662854">
    <property type="status" value="NOT_ANNOTATED_CDS"/>
    <property type="molecule type" value="Genomic_DNA"/>
</dbReference>
<dbReference type="EMBL" id="AL662870">
    <property type="status" value="NOT_ANNOTATED_CDS"/>
    <property type="molecule type" value="Genomic_DNA"/>
</dbReference>
<dbReference type="EMBL" id="AL773541">
    <property type="status" value="NOT_ANNOTATED_CDS"/>
    <property type="molecule type" value="Genomic_DNA"/>
</dbReference>
<dbReference type="EMBL" id="AL773589">
    <property type="status" value="NOT_ANNOTATED_CDS"/>
    <property type="molecule type" value="Genomic_DNA"/>
</dbReference>
<dbReference type="EMBL" id="AB202100">
    <property type="protein sequence ID" value="BAE78621.1"/>
    <property type="molecule type" value="Genomic_DNA"/>
</dbReference>
<dbReference type="EMBL" id="BX927194">
    <property type="status" value="NOT_ANNOTATED_CDS"/>
    <property type="molecule type" value="Genomic_DNA"/>
</dbReference>
<dbReference type="EMBL" id="CH471081">
    <property type="protein sequence ID" value="EAX03335.1"/>
    <property type="molecule type" value="Genomic_DNA"/>
</dbReference>
<dbReference type="EMBL" id="CH471081">
    <property type="protein sequence ID" value="EAX03338.1"/>
    <property type="molecule type" value="Genomic_DNA"/>
</dbReference>
<dbReference type="EMBL" id="BC008716">
    <property type="protein sequence ID" value="AAH08716.1"/>
    <property type="molecule type" value="mRNA"/>
</dbReference>
<dbReference type="EMBL" id="BC013400">
    <property type="protein sequence ID" value="AAH13400.1"/>
    <property type="molecule type" value="mRNA"/>
</dbReference>
<dbReference type="EMBL" id="BC070070">
    <property type="protein sequence ID" value="AAH70070.1"/>
    <property type="molecule type" value="mRNA"/>
</dbReference>
<dbReference type="CCDS" id="CCDS34385.1">
    <molecule id="Q08345-1"/>
</dbReference>
<dbReference type="CCDS" id="CCDS4690.1">
    <molecule id="Q08345-2"/>
</dbReference>
<dbReference type="CCDS" id="CCDS47396.1">
    <molecule id="Q08345-5"/>
</dbReference>
<dbReference type="CCDS" id="CCDS93879.1">
    <molecule id="Q08345-6"/>
</dbReference>
<dbReference type="PIR" id="A48280">
    <property type="entry name" value="A48280"/>
</dbReference>
<dbReference type="PIR" id="A49508">
    <property type="entry name" value="A49508"/>
</dbReference>
<dbReference type="RefSeq" id="NP_001189450.1">
    <property type="nucleotide sequence ID" value="NM_001202521.1"/>
</dbReference>
<dbReference type="RefSeq" id="NP_001189451.1">
    <property type="nucleotide sequence ID" value="NM_001202522.1"/>
</dbReference>
<dbReference type="RefSeq" id="NP_001189452.2">
    <molecule id="Q08345-2"/>
    <property type="nucleotide sequence ID" value="NM_001202523.3"/>
</dbReference>
<dbReference type="RefSeq" id="NP_001284581.1">
    <molecule id="Q08345-2"/>
    <property type="nucleotide sequence ID" value="NM_001297652.2"/>
</dbReference>
<dbReference type="RefSeq" id="NP_001284582.1">
    <molecule id="Q08345-2"/>
    <property type="nucleotide sequence ID" value="NM_001297653.2"/>
</dbReference>
<dbReference type="RefSeq" id="NP_001284583.1">
    <molecule id="Q08345-1"/>
    <property type="nucleotide sequence ID" value="NM_001297654.2"/>
</dbReference>
<dbReference type="RefSeq" id="NP_001374821.1">
    <molecule id="Q08345-5"/>
    <property type="nucleotide sequence ID" value="NM_001387892.1"/>
</dbReference>
<dbReference type="RefSeq" id="NP_001374822.1">
    <molecule id="Q08345-1"/>
    <property type="nucleotide sequence ID" value="NM_001387893.1"/>
</dbReference>
<dbReference type="RefSeq" id="NP_001374823.1">
    <molecule id="Q08345-1"/>
    <property type="nucleotide sequence ID" value="NM_001387894.1"/>
</dbReference>
<dbReference type="RefSeq" id="NP_001374824.1">
    <molecule id="Q08345-1"/>
    <property type="nucleotide sequence ID" value="NM_001387895.1"/>
</dbReference>
<dbReference type="RefSeq" id="NP_001374825.1">
    <molecule id="Q08345-1"/>
    <property type="nucleotide sequence ID" value="NM_001387896.1"/>
</dbReference>
<dbReference type="RefSeq" id="NP_001374826.1">
    <molecule id="Q08345-1"/>
    <property type="nucleotide sequence ID" value="NM_001387897.1"/>
</dbReference>
<dbReference type="RefSeq" id="NP_001374827.1">
    <molecule id="Q08345-1"/>
    <property type="nucleotide sequence ID" value="NM_001387898.1"/>
</dbReference>
<dbReference type="RefSeq" id="NP_001374828.1">
    <molecule id="Q08345-1"/>
    <property type="nucleotide sequence ID" value="NM_001387899.1"/>
</dbReference>
<dbReference type="RefSeq" id="NP_001374829.1">
    <molecule id="Q08345-1"/>
    <property type="nucleotide sequence ID" value="NM_001387900.1"/>
</dbReference>
<dbReference type="RefSeq" id="NP_001374830.1">
    <molecule id="Q08345-1"/>
    <property type="nucleotide sequence ID" value="NM_001387901.1"/>
</dbReference>
<dbReference type="RefSeq" id="NP_001374831.1">
    <molecule id="Q08345-1"/>
    <property type="nucleotide sequence ID" value="NM_001387902.1"/>
</dbReference>
<dbReference type="RefSeq" id="NP_001374832.1">
    <molecule id="Q08345-1"/>
    <property type="nucleotide sequence ID" value="NM_001387903.1"/>
</dbReference>
<dbReference type="RefSeq" id="NP_001374833.1">
    <molecule id="Q08345-1"/>
    <property type="nucleotide sequence ID" value="NM_001387904.1"/>
</dbReference>
<dbReference type="RefSeq" id="NP_001374837.1">
    <molecule id="Q08345-2"/>
    <property type="nucleotide sequence ID" value="NM_001387908.1"/>
</dbReference>
<dbReference type="RefSeq" id="NP_001374838.1">
    <molecule id="Q08345-2"/>
    <property type="nucleotide sequence ID" value="NM_001387909.1"/>
</dbReference>
<dbReference type="RefSeq" id="NP_001374839.1">
    <molecule id="Q08345-2"/>
    <property type="nucleotide sequence ID" value="NM_001387910.1"/>
</dbReference>
<dbReference type="RefSeq" id="NP_001374840.1">
    <molecule id="Q08345-2"/>
    <property type="nucleotide sequence ID" value="NM_001387911.1"/>
</dbReference>
<dbReference type="RefSeq" id="NP_001374841.1">
    <molecule id="Q08345-2"/>
    <property type="nucleotide sequence ID" value="NM_001387912.1"/>
</dbReference>
<dbReference type="RefSeq" id="NP_001374842.1">
    <molecule id="Q08345-2"/>
    <property type="nucleotide sequence ID" value="NM_001387913.1"/>
</dbReference>
<dbReference type="RefSeq" id="NP_001374843.1">
    <molecule id="Q08345-2"/>
    <property type="nucleotide sequence ID" value="NM_001387914.1"/>
</dbReference>
<dbReference type="RefSeq" id="NP_001374844.1">
    <molecule id="Q08345-2"/>
    <property type="nucleotide sequence ID" value="NM_001387915.1"/>
</dbReference>
<dbReference type="RefSeq" id="NP_001374845.1">
    <molecule id="Q08345-2"/>
    <property type="nucleotide sequence ID" value="NM_001387916.1"/>
</dbReference>
<dbReference type="RefSeq" id="NP_001374846.1">
    <molecule id="Q08345-2"/>
    <property type="nucleotide sequence ID" value="NM_001387917.1"/>
</dbReference>
<dbReference type="RefSeq" id="NP_001374847.1">
    <molecule id="Q08345-2"/>
    <property type="nucleotide sequence ID" value="NM_001387918.1"/>
</dbReference>
<dbReference type="RefSeq" id="NP_001397798.1">
    <molecule id="Q08345-6"/>
    <property type="nucleotide sequence ID" value="NM_001410869.1"/>
</dbReference>
<dbReference type="RefSeq" id="NP_001945.3">
    <molecule id="Q08345-2"/>
    <property type="nucleotide sequence ID" value="NM_001954.4"/>
</dbReference>
<dbReference type="RefSeq" id="NP_054699.2">
    <molecule id="Q08345-1"/>
    <property type="nucleotide sequence ID" value="NM_013993.3"/>
</dbReference>
<dbReference type="RefSeq" id="NP_054700.2">
    <molecule id="Q08345-5"/>
    <property type="nucleotide sequence ID" value="NM_013994.3"/>
</dbReference>
<dbReference type="RefSeq" id="XP_011513185.1">
    <property type="nucleotide sequence ID" value="XM_011514883.1"/>
</dbReference>
<dbReference type="RefSeq" id="XP_011513186.1">
    <molecule id="Q08345-5"/>
    <property type="nucleotide sequence ID" value="XM_011514884.2"/>
</dbReference>
<dbReference type="RefSeq" id="XP_011513187.1">
    <property type="nucleotide sequence ID" value="XM_011514885.1"/>
</dbReference>
<dbReference type="RefSeq" id="XP_011513188.1">
    <property type="nucleotide sequence ID" value="XM_011514886.1"/>
</dbReference>
<dbReference type="RefSeq" id="XP_011513189.1">
    <molecule id="Q08345-5"/>
    <property type="nucleotide sequence ID" value="XM_011514887.3"/>
</dbReference>
<dbReference type="RefSeq" id="XP_016866757.1">
    <molecule id="Q08345-5"/>
    <property type="nucleotide sequence ID" value="XM_017011268.3"/>
</dbReference>
<dbReference type="RefSeq" id="XP_024302308.1">
    <molecule id="Q08345-5"/>
    <property type="nucleotide sequence ID" value="XM_024446540.2"/>
</dbReference>
<dbReference type="RefSeq" id="XP_024302309.1">
    <molecule id="Q08345-5"/>
    <property type="nucleotide sequence ID" value="XM_024446541.2"/>
</dbReference>
<dbReference type="RefSeq" id="XP_047275283.1">
    <molecule id="Q08345-5"/>
    <property type="nucleotide sequence ID" value="XM_047419327.1"/>
</dbReference>
<dbReference type="RefSeq" id="XP_047275284.1">
    <molecule id="Q08345-5"/>
    <property type="nucleotide sequence ID" value="XM_047419328.1"/>
</dbReference>
<dbReference type="RefSeq" id="XP_047275285.1">
    <molecule id="Q08345-5"/>
    <property type="nucleotide sequence ID" value="XM_047419329.1"/>
</dbReference>
<dbReference type="RefSeq" id="XP_047275286.1">
    <molecule id="Q08345-5"/>
    <property type="nucleotide sequence ID" value="XM_047419330.1"/>
</dbReference>
<dbReference type="RefSeq" id="XP_047275288.1">
    <molecule id="Q08345-6"/>
    <property type="nucleotide sequence ID" value="XM_047419332.1"/>
</dbReference>
<dbReference type="RefSeq" id="XP_047275289.1">
    <molecule id="Q08345-6"/>
    <property type="nucleotide sequence ID" value="XM_047419333.1"/>
</dbReference>
<dbReference type="RefSeq" id="XP_054185850.1">
    <molecule id="Q08345-5"/>
    <property type="nucleotide sequence ID" value="XM_054329875.1"/>
</dbReference>
<dbReference type="RefSeq" id="XP_054185851.1">
    <molecule id="Q08345-5"/>
    <property type="nucleotide sequence ID" value="XM_054329876.1"/>
</dbReference>
<dbReference type="RefSeq" id="XP_054185852.1">
    <molecule id="Q08345-5"/>
    <property type="nucleotide sequence ID" value="XM_054329877.1"/>
</dbReference>
<dbReference type="RefSeq" id="XP_054185853.1">
    <molecule id="Q08345-5"/>
    <property type="nucleotide sequence ID" value="XM_054329878.1"/>
</dbReference>
<dbReference type="RefSeq" id="XP_054185854.1">
    <molecule id="Q08345-5"/>
    <property type="nucleotide sequence ID" value="XM_054329879.1"/>
</dbReference>
<dbReference type="RefSeq" id="XP_054185855.1">
    <molecule id="Q08345-5"/>
    <property type="nucleotide sequence ID" value="XM_054329880.1"/>
</dbReference>
<dbReference type="RefSeq" id="XP_054185856.1">
    <molecule id="Q08345-5"/>
    <property type="nucleotide sequence ID" value="XM_054329881.1"/>
</dbReference>
<dbReference type="RefSeq" id="XP_054186616.1">
    <molecule id="Q08345-5"/>
    <property type="nucleotide sequence ID" value="XM_054330641.1"/>
</dbReference>
<dbReference type="RefSeq" id="XP_054186617.1">
    <molecule id="Q08345-5"/>
    <property type="nucleotide sequence ID" value="XM_054330642.1"/>
</dbReference>
<dbReference type="RefSeq" id="XP_054186618.1">
    <molecule id="Q08345-5"/>
    <property type="nucleotide sequence ID" value="XM_054330643.1"/>
</dbReference>
<dbReference type="RefSeq" id="XP_054186619.1">
    <molecule id="Q08345-5"/>
    <property type="nucleotide sequence ID" value="XM_054330644.1"/>
</dbReference>
<dbReference type="RefSeq" id="XP_054186620.1">
    <molecule id="Q08345-5"/>
    <property type="nucleotide sequence ID" value="XM_054330645.1"/>
</dbReference>
<dbReference type="RefSeq" id="XP_054186621.1">
    <molecule id="Q08345-5"/>
    <property type="nucleotide sequence ID" value="XM_054330646.1"/>
</dbReference>
<dbReference type="RefSeq" id="XP_054186622.1">
    <molecule id="Q08345-5"/>
    <property type="nucleotide sequence ID" value="XM_054330647.1"/>
</dbReference>
<dbReference type="RefSeq" id="XP_054186623.1">
    <molecule id="Q08345-5"/>
    <property type="nucleotide sequence ID" value="XM_054330648.1"/>
</dbReference>
<dbReference type="RefSeq" id="XP_054186625.1">
    <molecule id="Q08345-6"/>
    <property type="nucleotide sequence ID" value="XM_054330650.1"/>
</dbReference>
<dbReference type="RefSeq" id="XP_054186626.1">
    <molecule id="Q08345-6"/>
    <property type="nucleotide sequence ID" value="XM_054330651.1"/>
</dbReference>
<dbReference type="RefSeq" id="XP_054187113.1">
    <molecule id="Q08345-5"/>
    <property type="nucleotide sequence ID" value="XM_054331138.1"/>
</dbReference>
<dbReference type="RefSeq" id="XP_054187114.1">
    <molecule id="Q08345-5"/>
    <property type="nucleotide sequence ID" value="XM_054331139.1"/>
</dbReference>
<dbReference type="RefSeq" id="XP_054187115.1">
    <molecule id="Q08345-5"/>
    <property type="nucleotide sequence ID" value="XM_054331140.1"/>
</dbReference>
<dbReference type="RefSeq" id="XP_054187116.1">
    <molecule id="Q08345-5"/>
    <property type="nucleotide sequence ID" value="XM_054331141.1"/>
</dbReference>
<dbReference type="RefSeq" id="XP_054187117.1">
    <molecule id="Q08345-5"/>
    <property type="nucleotide sequence ID" value="XM_054331142.1"/>
</dbReference>
<dbReference type="RefSeq" id="XP_054187118.1">
    <molecule id="Q08345-5"/>
    <property type="nucleotide sequence ID" value="XM_054331143.1"/>
</dbReference>
<dbReference type="RefSeq" id="XP_054187119.1">
    <molecule id="Q08345-5"/>
    <property type="nucleotide sequence ID" value="XM_054331144.1"/>
</dbReference>
<dbReference type="RefSeq" id="XP_054187120.1">
    <molecule id="Q08345-5"/>
    <property type="nucleotide sequence ID" value="XM_054331145.1"/>
</dbReference>
<dbReference type="RefSeq" id="XP_054187122.1">
    <molecule id="Q08345-6"/>
    <property type="nucleotide sequence ID" value="XM_054331147.1"/>
</dbReference>
<dbReference type="RefSeq" id="XP_054187123.1">
    <molecule id="Q08345-6"/>
    <property type="nucleotide sequence ID" value="XM_054331148.1"/>
</dbReference>
<dbReference type="RefSeq" id="XP_054212343.1">
    <molecule id="Q08345-5"/>
    <property type="nucleotide sequence ID" value="XM_054356368.1"/>
</dbReference>
<dbReference type="RefSeq" id="XP_054212344.1">
    <molecule id="Q08345-5"/>
    <property type="nucleotide sequence ID" value="XM_054356369.1"/>
</dbReference>
<dbReference type="RefSeq" id="XP_054212345.1">
    <molecule id="Q08345-5"/>
    <property type="nucleotide sequence ID" value="XM_054356370.1"/>
</dbReference>
<dbReference type="RefSeq" id="XP_054212346.1">
    <molecule id="Q08345-5"/>
    <property type="nucleotide sequence ID" value="XM_054356371.1"/>
</dbReference>
<dbReference type="RefSeq" id="XP_054212347.1">
    <molecule id="Q08345-5"/>
    <property type="nucleotide sequence ID" value="XM_054356372.1"/>
</dbReference>
<dbReference type="RefSeq" id="XP_054212348.1">
    <molecule id="Q08345-5"/>
    <property type="nucleotide sequence ID" value="XM_054356373.1"/>
</dbReference>
<dbReference type="RefSeq" id="XP_054212349.1">
    <molecule id="Q08345-5"/>
    <property type="nucleotide sequence ID" value="XM_054356374.1"/>
</dbReference>
<dbReference type="RefSeq" id="XP_054212350.1">
    <molecule id="Q08345-5"/>
    <property type="nucleotide sequence ID" value="XM_054356375.1"/>
</dbReference>
<dbReference type="RefSeq" id="XP_054212351.1">
    <molecule id="Q08345-6"/>
    <property type="nucleotide sequence ID" value="XM_054356376.1"/>
</dbReference>
<dbReference type="PDB" id="3ZOS">
    <property type="method" value="X-ray"/>
    <property type="resolution" value="1.92 A"/>
    <property type="chains" value="A/B=601-913"/>
</dbReference>
<dbReference type="PDB" id="4AG4">
    <property type="method" value="X-ray"/>
    <property type="resolution" value="2.80 A"/>
    <property type="chains" value="A=29-367"/>
</dbReference>
<dbReference type="PDB" id="4BKJ">
    <property type="method" value="X-ray"/>
    <property type="resolution" value="1.70 A"/>
    <property type="chains" value="A/B=601-913"/>
</dbReference>
<dbReference type="PDB" id="4CKR">
    <property type="method" value="X-ray"/>
    <property type="resolution" value="2.20 A"/>
    <property type="chains" value="A=601-913"/>
</dbReference>
<dbReference type="PDB" id="5BVK">
    <property type="method" value="X-ray"/>
    <property type="resolution" value="2.29 A"/>
    <property type="chains" value="A=595-913"/>
</dbReference>
<dbReference type="PDB" id="5BVN">
    <property type="method" value="X-ray"/>
    <property type="resolution" value="2.21 A"/>
    <property type="chains" value="A=595-913"/>
</dbReference>
<dbReference type="PDB" id="5BVO">
    <property type="method" value="X-ray"/>
    <property type="resolution" value="1.98 A"/>
    <property type="chains" value="A=595-913"/>
</dbReference>
<dbReference type="PDB" id="5BVW">
    <property type="method" value="X-ray"/>
    <property type="resolution" value="1.94 A"/>
    <property type="chains" value="A=595-913"/>
</dbReference>
<dbReference type="PDB" id="5FDP">
    <property type="method" value="X-ray"/>
    <property type="resolution" value="2.25 A"/>
    <property type="chains" value="A=601-913"/>
</dbReference>
<dbReference type="PDB" id="5FDX">
    <property type="method" value="X-ray"/>
    <property type="resolution" value="2.65 A"/>
    <property type="chains" value="A/B=601-913"/>
</dbReference>
<dbReference type="PDB" id="5SAU">
    <property type="method" value="X-ray"/>
    <property type="resolution" value="1.80 A"/>
    <property type="chains" value="A=593-913"/>
</dbReference>
<dbReference type="PDB" id="5SAV">
    <property type="method" value="X-ray"/>
    <property type="resolution" value="1.76 A"/>
    <property type="chains" value="A=593-913"/>
</dbReference>
<dbReference type="PDB" id="5SAW">
    <property type="method" value="X-ray"/>
    <property type="resolution" value="1.60 A"/>
    <property type="chains" value="A=593-913"/>
</dbReference>
<dbReference type="PDB" id="5SAX">
    <property type="method" value="X-ray"/>
    <property type="resolution" value="1.90 A"/>
    <property type="chains" value="A=593-913"/>
</dbReference>
<dbReference type="PDB" id="5SAY">
    <property type="method" value="X-ray"/>
    <property type="resolution" value="2.19 A"/>
    <property type="chains" value="A/B=593-913"/>
</dbReference>
<dbReference type="PDB" id="5SAZ">
    <property type="method" value="X-ray"/>
    <property type="resolution" value="1.80 A"/>
    <property type="chains" value="A=593-913"/>
</dbReference>
<dbReference type="PDB" id="5SB0">
    <property type="method" value="X-ray"/>
    <property type="resolution" value="1.97 A"/>
    <property type="chains" value="A=593-913"/>
</dbReference>
<dbReference type="PDB" id="5SB1">
    <property type="method" value="X-ray"/>
    <property type="resolution" value="1.53 A"/>
    <property type="chains" value="A=593-913"/>
</dbReference>
<dbReference type="PDB" id="5SB2">
    <property type="method" value="X-ray"/>
    <property type="resolution" value="1.60 A"/>
    <property type="chains" value="A=593-913"/>
</dbReference>
<dbReference type="PDB" id="6BRJ">
    <property type="method" value="X-ray"/>
    <property type="resolution" value="2.23 A"/>
    <property type="chains" value="A=1-913"/>
</dbReference>
<dbReference type="PDB" id="6BSD">
    <property type="method" value="X-ray"/>
    <property type="resolution" value="2.61 A"/>
    <property type="chains" value="A=1-913"/>
</dbReference>
<dbReference type="PDB" id="6FEW">
    <property type="method" value="X-ray"/>
    <property type="resolution" value="1.44 A"/>
    <property type="chains" value="A=593-913"/>
</dbReference>
<dbReference type="PDB" id="6FEX">
    <property type="method" value="X-ray"/>
    <property type="resolution" value="1.29 A"/>
    <property type="chains" value="A=593-913"/>
</dbReference>
<dbReference type="PDB" id="6FIL">
    <property type="method" value="X-ray"/>
    <property type="resolution" value="1.73 A"/>
    <property type="chains" value="A=593-913"/>
</dbReference>
<dbReference type="PDB" id="6FIN">
    <property type="method" value="X-ray"/>
    <property type="resolution" value="1.67 A"/>
    <property type="chains" value="A=593-913"/>
</dbReference>
<dbReference type="PDB" id="6FIO">
    <property type="method" value="X-ray"/>
    <property type="resolution" value="1.99 A"/>
    <property type="chains" value="A=593-913"/>
</dbReference>
<dbReference type="PDB" id="6FIQ">
    <property type="method" value="X-ray"/>
    <property type="resolution" value="1.79 A"/>
    <property type="chains" value="A=593-913"/>
</dbReference>
<dbReference type="PDB" id="6GWR">
    <property type="method" value="X-ray"/>
    <property type="resolution" value="2.07 A"/>
    <property type="chains" value="A/B=601-913"/>
</dbReference>
<dbReference type="PDB" id="6HP9">
    <property type="method" value="X-ray"/>
    <property type="resolution" value="1.96 A"/>
    <property type="chains" value="A/B=601-913"/>
</dbReference>
<dbReference type="PDB" id="6Y23">
    <property type="method" value="X-ray"/>
    <property type="resolution" value="2.58 A"/>
    <property type="chains" value="A/B/C=566-913"/>
</dbReference>
<dbReference type="PDB" id="7BCM">
    <property type="method" value="X-ray"/>
    <property type="resolution" value="2.30 A"/>
    <property type="chains" value="A/B=601-913"/>
</dbReference>
<dbReference type="PDB" id="7BE6">
    <property type="method" value="X-ray"/>
    <property type="resolution" value="1.87 A"/>
    <property type="chains" value="A=601-913"/>
</dbReference>
<dbReference type="PDB" id="7FEH">
    <property type="method" value="X-ray"/>
    <property type="resolution" value="1.61 A"/>
    <property type="chains" value="A=593-913"/>
</dbReference>
<dbReference type="PDB" id="8PE9">
    <property type="method" value="X-ray"/>
    <property type="resolution" value="3.15 A"/>
    <property type="chains" value="A=188-370"/>
</dbReference>
<dbReference type="PDBsum" id="3ZOS"/>
<dbReference type="PDBsum" id="4AG4"/>
<dbReference type="PDBsum" id="4BKJ"/>
<dbReference type="PDBsum" id="4CKR"/>
<dbReference type="PDBsum" id="5BVK"/>
<dbReference type="PDBsum" id="5BVN"/>
<dbReference type="PDBsum" id="5BVO"/>
<dbReference type="PDBsum" id="5BVW"/>
<dbReference type="PDBsum" id="5FDP"/>
<dbReference type="PDBsum" id="5FDX"/>
<dbReference type="PDBsum" id="5SAU"/>
<dbReference type="PDBsum" id="5SAV"/>
<dbReference type="PDBsum" id="5SAW"/>
<dbReference type="PDBsum" id="5SAX"/>
<dbReference type="PDBsum" id="5SAY"/>
<dbReference type="PDBsum" id="5SAZ"/>
<dbReference type="PDBsum" id="5SB0"/>
<dbReference type="PDBsum" id="5SB1"/>
<dbReference type="PDBsum" id="5SB2"/>
<dbReference type="PDBsum" id="6BRJ"/>
<dbReference type="PDBsum" id="6BSD"/>
<dbReference type="PDBsum" id="6FEW"/>
<dbReference type="PDBsum" id="6FEX"/>
<dbReference type="PDBsum" id="6FIL"/>
<dbReference type="PDBsum" id="6FIN"/>
<dbReference type="PDBsum" id="6FIO"/>
<dbReference type="PDBsum" id="6FIQ"/>
<dbReference type="PDBsum" id="6GWR"/>
<dbReference type="PDBsum" id="6HP9"/>
<dbReference type="PDBsum" id="6Y23"/>
<dbReference type="PDBsum" id="7BCM"/>
<dbReference type="PDBsum" id="7BE6"/>
<dbReference type="PDBsum" id="7FEH"/>
<dbReference type="PDBsum" id="8PE9"/>
<dbReference type="SMR" id="Q08345"/>
<dbReference type="BioGRID" id="107234">
    <property type="interactions" value="159"/>
</dbReference>
<dbReference type="CORUM" id="Q08345"/>
<dbReference type="DIP" id="DIP-39698N"/>
<dbReference type="FunCoup" id="Q08345">
    <property type="interactions" value="57"/>
</dbReference>
<dbReference type="IntAct" id="Q08345">
    <property type="interactions" value="144"/>
</dbReference>
<dbReference type="MINT" id="Q08345"/>
<dbReference type="STRING" id="9606.ENSP00000427552"/>
<dbReference type="BindingDB" id="Q08345"/>
<dbReference type="ChEMBL" id="CHEMBL5319"/>
<dbReference type="DrugBank" id="DB12010">
    <property type="generic name" value="Fostamatinib"/>
</dbReference>
<dbReference type="DrugBank" id="DB00619">
    <property type="generic name" value="Imatinib"/>
</dbReference>
<dbReference type="DrugBank" id="DB15822">
    <property type="generic name" value="Pralsetinib"/>
</dbReference>
<dbReference type="DrugCentral" id="Q08345"/>
<dbReference type="GuidetoPHARMACOLOGY" id="1843"/>
<dbReference type="GlyCosmos" id="Q08345">
    <property type="glycosylation" value="4 sites, No reported glycans"/>
</dbReference>
<dbReference type="GlyGen" id="Q08345">
    <property type="glycosylation" value="12 sites, 1 O-linked glycan (1 site)"/>
</dbReference>
<dbReference type="iPTMnet" id="Q08345"/>
<dbReference type="PhosphoSitePlus" id="Q08345"/>
<dbReference type="BioMuta" id="DDR1"/>
<dbReference type="DMDM" id="729008"/>
<dbReference type="CPTAC" id="CPTAC-2860"/>
<dbReference type="CPTAC" id="CPTAC-2861"/>
<dbReference type="jPOST" id="Q08345"/>
<dbReference type="MassIVE" id="Q08345"/>
<dbReference type="PaxDb" id="9606-ENSP00000427552"/>
<dbReference type="PeptideAtlas" id="Q08345"/>
<dbReference type="ProteomicsDB" id="58595">
    <molecule id="Q08345-1"/>
</dbReference>
<dbReference type="ProteomicsDB" id="58596">
    <molecule id="Q08345-2"/>
</dbReference>
<dbReference type="ProteomicsDB" id="58597">
    <molecule id="Q08345-4"/>
</dbReference>
<dbReference type="ProteomicsDB" id="58598">
    <molecule id="Q08345-5"/>
</dbReference>
<dbReference type="ProteomicsDB" id="58599">
    <molecule id="Q08345-6"/>
</dbReference>
<dbReference type="ABCD" id="Q08345">
    <property type="antibodies" value="1 sequenced antibody"/>
</dbReference>
<dbReference type="Antibodypedia" id="48090">
    <property type="antibodies" value="843 antibodies from 43 providers"/>
</dbReference>
<dbReference type="DNASU" id="780"/>
<dbReference type="Ensembl" id="ENST00000259875.11">
    <molecule id="Q08345-2"/>
    <property type="protein sequence ID" value="ENSP00000259875.7"/>
    <property type="gene ID" value="ENSG00000137332.19"/>
</dbReference>
<dbReference type="Ensembl" id="ENST00000324771.12">
    <molecule id="Q08345-1"/>
    <property type="protein sequence ID" value="ENSP00000318217.8"/>
    <property type="gene ID" value="ENSG00000204580.14"/>
</dbReference>
<dbReference type="Ensembl" id="ENST00000376567.6">
    <molecule id="Q08345-2"/>
    <property type="protein sequence ID" value="ENSP00000365751.2"/>
    <property type="gene ID" value="ENSG00000204580.14"/>
</dbReference>
<dbReference type="Ensembl" id="ENST00000376568.8">
    <molecule id="Q08345-1"/>
    <property type="protein sequence ID" value="ENSP00000365752.3"/>
    <property type="gene ID" value="ENSG00000204580.14"/>
</dbReference>
<dbReference type="Ensembl" id="ENST00000376569.7">
    <molecule id="Q08345-2"/>
    <property type="protein sequence ID" value="ENSP00000365753.3"/>
    <property type="gene ID" value="ENSG00000204580.14"/>
</dbReference>
<dbReference type="Ensembl" id="ENST00000376570.8">
    <molecule id="Q08345-2"/>
    <property type="protein sequence ID" value="ENSP00000365754.4"/>
    <property type="gene ID" value="ENSG00000204580.14"/>
</dbReference>
<dbReference type="Ensembl" id="ENST00000376575.7">
    <molecule id="Q08345-4"/>
    <property type="protein sequence ID" value="ENSP00000365759.4"/>
    <property type="gene ID" value="ENSG00000204580.14"/>
</dbReference>
<dbReference type="Ensembl" id="ENST00000383377.6">
    <molecule id="Q08345-1"/>
    <property type="protein sequence ID" value="ENSP00000372868.2"/>
    <property type="gene ID" value="ENSG00000137332.19"/>
</dbReference>
<dbReference type="Ensembl" id="ENST00000400410.5">
    <molecule id="Q08345-2"/>
    <property type="protein sequence ID" value="ENSP00000383261.1"/>
    <property type="gene ID" value="ENSG00000137332.19"/>
</dbReference>
<dbReference type="Ensembl" id="ENST00000400411.5">
    <molecule id="Q08345-2"/>
    <property type="protein sequence ID" value="ENSP00000383262.1"/>
    <property type="gene ID" value="ENSG00000137332.19"/>
</dbReference>
<dbReference type="Ensembl" id="ENST00000400414.5">
    <molecule id="Q08345-1"/>
    <property type="protein sequence ID" value="ENSP00000383265.1"/>
    <property type="gene ID" value="ENSG00000137332.19"/>
</dbReference>
<dbReference type="Ensembl" id="ENST00000400486.5">
    <molecule id="Q08345-2"/>
    <property type="protein sequence ID" value="ENSP00000383334.1"/>
    <property type="gene ID" value="ENSG00000215522.11"/>
</dbReference>
<dbReference type="Ensembl" id="ENST00000400488.5">
    <molecule id="Q08345-2"/>
    <property type="protein sequence ID" value="ENSP00000383336.1"/>
    <property type="gene ID" value="ENSG00000215522.11"/>
</dbReference>
<dbReference type="Ensembl" id="ENST00000400489.7">
    <molecule id="Q08345-2"/>
    <property type="protein sequence ID" value="ENSP00000383337.3"/>
    <property type="gene ID" value="ENSG00000215522.11"/>
</dbReference>
<dbReference type="Ensembl" id="ENST00000400491.5">
    <molecule id="Q08345-1"/>
    <property type="protein sequence ID" value="ENSP00000383338.1"/>
    <property type="gene ID" value="ENSG00000215522.11"/>
</dbReference>
<dbReference type="Ensembl" id="ENST00000400492.5">
    <molecule id="Q08345-1"/>
    <property type="protein sequence ID" value="ENSP00000383339.1"/>
    <property type="gene ID" value="ENSG00000215522.11"/>
</dbReference>
<dbReference type="Ensembl" id="ENST00000412329.5">
    <molecule id="Q08345-1"/>
    <property type="protein sequence ID" value="ENSP00000391805.1"/>
    <property type="gene ID" value="ENSG00000230456.10"/>
</dbReference>
<dbReference type="Ensembl" id="ENST00000415092.5">
    <molecule id="Q08345-2"/>
    <property type="protein sequence ID" value="ENSP00000405540.1"/>
    <property type="gene ID" value="ENSG00000230456.10"/>
</dbReference>
<dbReference type="Ensembl" id="ENST00000418800.6">
    <molecule id="Q08345-2"/>
    <property type="protein sequence ID" value="ENSP00000407699.2"/>
    <property type="gene ID" value="ENSG00000204580.14"/>
</dbReference>
<dbReference type="Ensembl" id="ENST00000419412.5">
    <molecule id="Q08345-2"/>
    <property type="protein sequence ID" value="ENSP00000416183.1"/>
    <property type="gene ID" value="ENSG00000234078.10"/>
</dbReference>
<dbReference type="Ensembl" id="ENST00000421229.6">
    <molecule id="Q08345-2"/>
    <property type="protein sequence ID" value="ENSP00000415730.2"/>
    <property type="gene ID" value="ENSG00000234078.10"/>
</dbReference>
<dbReference type="Ensembl" id="ENST00000427053.6">
    <molecule id="Q08345-2"/>
    <property type="protein sequence ID" value="ENSP00000416145.2"/>
    <property type="gene ID" value="ENSG00000230456.10"/>
</dbReference>
<dbReference type="Ensembl" id="ENST00000429699.5">
    <molecule id="Q08345-1"/>
    <property type="protein sequence ID" value="ENSP00000401397.1"/>
    <property type="gene ID" value="ENSG00000234078.10"/>
</dbReference>
<dbReference type="Ensembl" id="ENST00000430933.5">
    <molecule id="Q08345-1"/>
    <property type="protein sequence ID" value="ENSP00000397769.1"/>
    <property type="gene ID" value="ENSG00000234078.10"/>
</dbReference>
<dbReference type="Ensembl" id="ENST00000449518.5">
    <molecule id="Q08345-1"/>
    <property type="protein sequence ID" value="ENSP00000414285.1"/>
    <property type="gene ID" value="ENSG00000230456.10"/>
</dbReference>
<dbReference type="Ensembl" id="ENST00000452441.5">
    <molecule id="Q08345-1"/>
    <property type="protein sequence ID" value="ENSP00000405039.1"/>
    <property type="gene ID" value="ENSG00000204580.14"/>
</dbReference>
<dbReference type="Ensembl" id="ENST00000453510.5">
    <molecule id="Q08345-2"/>
    <property type="protein sequence ID" value="ENSP00000401208.1"/>
    <property type="gene ID" value="ENSG00000230456.10"/>
</dbReference>
<dbReference type="Ensembl" id="ENST00000454612.6">
    <molecule id="Q08345-2"/>
    <property type="protein sequence ID" value="ENSP00000406091.2"/>
    <property type="gene ID" value="ENSG00000204580.14"/>
</dbReference>
<dbReference type="Ensembl" id="ENST00000454774.5">
    <molecule id="Q08345-2"/>
    <property type="protein sequence ID" value="ENSP00000400393.1"/>
    <property type="gene ID" value="ENSG00000234078.10"/>
</dbReference>
<dbReference type="Ensembl" id="ENST00000482873.6">
    <molecule id="Q08345-4"/>
    <property type="protein sequence ID" value="ENSP00000421978.1"/>
    <property type="gene ID" value="ENSG00000204580.14"/>
</dbReference>
<dbReference type="Ensembl" id="ENST00000508312.5">
    <molecule id="Q08345-6"/>
    <property type="protein sequence ID" value="ENSP00000422442.1"/>
    <property type="gene ID" value="ENSG00000204580.14"/>
</dbReference>
<dbReference type="Ensembl" id="ENST00000513240.5">
    <molecule id="Q08345-5"/>
    <property type="protein sequence ID" value="ENSP00000427552.1"/>
    <property type="gene ID" value="ENSG00000204580.14"/>
</dbReference>
<dbReference type="Ensembl" id="ENST00000548133.4">
    <molecule id="Q08345-1"/>
    <property type="protein sequence ID" value="ENSP00000449611.2"/>
    <property type="gene ID" value="ENSG00000230456.10"/>
</dbReference>
<dbReference type="Ensembl" id="ENST00000548962.5">
    <molecule id="Q08345-6"/>
    <property type="protein sequence ID" value="ENSP00000448115.2"/>
    <property type="gene ID" value="ENSG00000230456.10"/>
</dbReference>
<dbReference type="Ensembl" id="ENST00000549026.3">
    <molecule id="Q08345-6"/>
    <property type="protein sequence ID" value="ENSP00000449238.2"/>
    <property type="gene ID" value="ENSG00000215522.11"/>
</dbReference>
<dbReference type="Ensembl" id="ENST00000550384.5">
    <molecule id="Q08345-6"/>
    <property type="protein sequence ID" value="ENSP00000447474.2"/>
    <property type="gene ID" value="ENSG00000234078.10"/>
</dbReference>
<dbReference type="Ensembl" id="ENST00000550395.5">
    <molecule id="Q08345-1"/>
    <property type="protein sequence ID" value="ENSP00000449255.2"/>
    <property type="gene ID" value="ENSG00000215522.11"/>
</dbReference>
<dbReference type="Ensembl" id="ENST00000552068.5">
    <molecule id="Q08345-1"/>
    <property type="protein sequence ID" value="ENSP00000449190.2"/>
    <property type="gene ID" value="ENSG00000234078.10"/>
</dbReference>
<dbReference type="Ensembl" id="ENST00000552721.4">
    <molecule id="Q08345-6"/>
    <property type="protein sequence ID" value="ENSP00000449307.2"/>
    <property type="gene ID" value="ENSG00000137332.19"/>
</dbReference>
<dbReference type="Ensembl" id="ENST00000553015.5">
    <molecule id="Q08345-1"/>
    <property type="protein sequence ID" value="ENSP00000448377.2"/>
    <property type="gene ID" value="ENSG00000137332.19"/>
</dbReference>
<dbReference type="Ensembl" id="ENST00000617572.3">
    <molecule id="Q08345-4"/>
    <property type="protein sequence ID" value="ENSP00000479195.1"/>
    <property type="gene ID" value="ENSG00000215522.11"/>
</dbReference>
<dbReference type="Ensembl" id="ENST00000618059.2">
    <molecule id="Q08345-4"/>
    <property type="protein sequence ID" value="ENSP00000479204.1"/>
    <property type="gene ID" value="ENSG00000234078.10"/>
</dbReference>
<dbReference type="Ensembl" id="ENST00000620318.4">
    <molecule id="Q08345-4"/>
    <property type="protein sequence ID" value="ENSP00000484588.1"/>
    <property type="gene ID" value="ENSG00000137332.19"/>
</dbReference>
<dbReference type="Ensembl" id="ENST00000621544.4">
    <molecule id="Q08345-4"/>
    <property type="protein sequence ID" value="ENSP00000484013.1"/>
    <property type="gene ID" value="ENSG00000230456.10"/>
</dbReference>
<dbReference type="GeneID" id="780"/>
<dbReference type="KEGG" id="hsa:780"/>
<dbReference type="MANE-Select" id="ENST00000376568.8">
    <property type="protein sequence ID" value="ENSP00000365752.3"/>
    <property type="RefSeq nucleotide sequence ID" value="NM_001297654.2"/>
    <property type="RefSeq protein sequence ID" value="NP_001284583.1"/>
</dbReference>
<dbReference type="UCSC" id="uc003nrq.4">
    <molecule id="Q08345-1"/>
    <property type="organism name" value="human"/>
</dbReference>
<dbReference type="AGR" id="HGNC:2730"/>
<dbReference type="CTD" id="780"/>
<dbReference type="DisGeNET" id="780"/>
<dbReference type="GeneCards" id="DDR1"/>
<dbReference type="HGNC" id="HGNC:2730">
    <property type="gene designation" value="DDR1"/>
</dbReference>
<dbReference type="HPA" id="ENSG00000204580">
    <property type="expression patterns" value="Low tissue specificity"/>
</dbReference>
<dbReference type="MalaCards" id="DDR1"/>
<dbReference type="MIM" id="600408">
    <property type="type" value="gene"/>
</dbReference>
<dbReference type="neXtProt" id="NX_Q08345"/>
<dbReference type="OpenTargets" id="ENSG00000204580"/>
<dbReference type="PharmGKB" id="PA24348"/>
<dbReference type="VEuPathDB" id="HostDB:ENSG00000204580"/>
<dbReference type="eggNOG" id="KOG1094">
    <property type="taxonomic scope" value="Eukaryota"/>
</dbReference>
<dbReference type="GeneTree" id="ENSGT00940000159733"/>
<dbReference type="HOGENOM" id="CLU_008873_2_0_1"/>
<dbReference type="InParanoid" id="Q08345"/>
<dbReference type="OMA" id="RDAEYQE"/>
<dbReference type="OrthoDB" id="6071166at2759"/>
<dbReference type="PAN-GO" id="Q08345">
    <property type="GO annotations" value="7 GO annotations based on evolutionary models"/>
</dbReference>
<dbReference type="PhylomeDB" id="Q08345"/>
<dbReference type="TreeFam" id="TF317840"/>
<dbReference type="BRENDA" id="2.7.10.1">
    <property type="organism ID" value="2681"/>
</dbReference>
<dbReference type="PathwayCommons" id="Q08345"/>
<dbReference type="Reactome" id="R-HSA-3000171">
    <property type="pathway name" value="Non-integrin membrane-ECM interactions"/>
</dbReference>
<dbReference type="SignaLink" id="Q08345"/>
<dbReference type="SIGNOR" id="Q08345"/>
<dbReference type="BioGRID-ORCS" id="780">
    <property type="hits" value="17 hits in 1191 CRISPR screens"/>
</dbReference>
<dbReference type="ChiTaRS" id="DDR1">
    <property type="organism name" value="human"/>
</dbReference>
<dbReference type="EvolutionaryTrace" id="Q08345"/>
<dbReference type="GeneWiki" id="DDR1"/>
<dbReference type="GenomeRNAi" id="780"/>
<dbReference type="Pharos" id="Q08345">
    <property type="development level" value="Tchem"/>
</dbReference>
<dbReference type="PRO" id="PR:Q08345"/>
<dbReference type="Proteomes" id="UP000005640">
    <property type="component" value="Chromosome 6"/>
</dbReference>
<dbReference type="RNAct" id="Q08345">
    <property type="molecule type" value="protein"/>
</dbReference>
<dbReference type="Bgee" id="ENSG00000137332">
    <property type="expression patterns" value="Expressed in cerebral cortex and 4 other cell types or tissues"/>
</dbReference>
<dbReference type="ExpressionAtlas" id="Q08345">
    <property type="expression patterns" value="baseline and differential"/>
</dbReference>
<dbReference type="GO" id="GO:0070062">
    <property type="term" value="C:extracellular exosome"/>
    <property type="evidence" value="ECO:0007005"/>
    <property type="project" value="UniProtKB"/>
</dbReference>
<dbReference type="GO" id="GO:0005615">
    <property type="term" value="C:extracellular space"/>
    <property type="evidence" value="ECO:0007005"/>
    <property type="project" value="UniProtKB"/>
</dbReference>
<dbReference type="GO" id="GO:0005886">
    <property type="term" value="C:plasma membrane"/>
    <property type="evidence" value="ECO:0000314"/>
    <property type="project" value="HPA"/>
</dbReference>
<dbReference type="GO" id="GO:0043235">
    <property type="term" value="C:receptor complex"/>
    <property type="evidence" value="ECO:0000314"/>
    <property type="project" value="MGI"/>
</dbReference>
<dbReference type="GO" id="GO:0005524">
    <property type="term" value="F:ATP binding"/>
    <property type="evidence" value="ECO:0007669"/>
    <property type="project" value="UniProtKB-KW"/>
</dbReference>
<dbReference type="GO" id="GO:0005518">
    <property type="term" value="F:collagen binding"/>
    <property type="evidence" value="ECO:0000314"/>
    <property type="project" value="UniProtKB"/>
</dbReference>
<dbReference type="GO" id="GO:0046872">
    <property type="term" value="F:metal ion binding"/>
    <property type="evidence" value="ECO:0007669"/>
    <property type="project" value="UniProtKB-KW"/>
</dbReference>
<dbReference type="GO" id="GO:0038062">
    <property type="term" value="F:protein tyrosine kinase collagen receptor activity"/>
    <property type="evidence" value="ECO:0000314"/>
    <property type="project" value="UniProtKB"/>
</dbReference>
<dbReference type="GO" id="GO:0004714">
    <property type="term" value="F:transmembrane receptor protein tyrosine kinase activity"/>
    <property type="evidence" value="ECO:0000304"/>
    <property type="project" value="ProtInc"/>
</dbReference>
<dbReference type="GO" id="GO:0061564">
    <property type="term" value="P:axon development"/>
    <property type="evidence" value="ECO:0007669"/>
    <property type="project" value="Ensembl"/>
</dbReference>
<dbReference type="GO" id="GO:0060444">
    <property type="term" value="P:branching involved in mammary gland duct morphogenesis"/>
    <property type="evidence" value="ECO:0007669"/>
    <property type="project" value="Ensembl"/>
</dbReference>
<dbReference type="GO" id="GO:0007155">
    <property type="term" value="P:cell adhesion"/>
    <property type="evidence" value="ECO:0000304"/>
    <property type="project" value="ProtInc"/>
</dbReference>
<dbReference type="GO" id="GO:0008283">
    <property type="term" value="P:cell population proliferation"/>
    <property type="evidence" value="ECO:0007669"/>
    <property type="project" value="Ensembl"/>
</dbReference>
<dbReference type="GO" id="GO:0007169">
    <property type="term" value="P:cell surface receptor protein tyrosine kinase signaling pathway"/>
    <property type="evidence" value="ECO:0000318"/>
    <property type="project" value="GO_Central"/>
</dbReference>
<dbReference type="GO" id="GO:0038063">
    <property type="term" value="P:collagen-activated tyrosine kinase receptor signaling pathway"/>
    <property type="evidence" value="ECO:0000314"/>
    <property type="project" value="UniProtKB"/>
</dbReference>
<dbReference type="GO" id="GO:0043583">
    <property type="term" value="P:ear development"/>
    <property type="evidence" value="ECO:0007669"/>
    <property type="project" value="Ensembl"/>
</dbReference>
<dbReference type="GO" id="GO:0007566">
    <property type="term" value="P:embryo implantation"/>
    <property type="evidence" value="ECO:0007669"/>
    <property type="project" value="Ensembl"/>
</dbReference>
<dbReference type="GO" id="GO:0007595">
    <property type="term" value="P:lactation"/>
    <property type="evidence" value="ECO:0007669"/>
    <property type="project" value="UniProtKB-KW"/>
</dbReference>
<dbReference type="GO" id="GO:0060749">
    <property type="term" value="P:mammary gland alveolus development"/>
    <property type="evidence" value="ECO:0007669"/>
    <property type="project" value="Ensembl"/>
</dbReference>
<dbReference type="GO" id="GO:0008285">
    <property type="term" value="P:negative regulation of cell population proliferation"/>
    <property type="evidence" value="ECO:0007669"/>
    <property type="project" value="Ensembl"/>
</dbReference>
<dbReference type="GO" id="GO:1990138">
    <property type="term" value="P:neuron projection extension"/>
    <property type="evidence" value="ECO:0007669"/>
    <property type="project" value="Ensembl"/>
</dbReference>
<dbReference type="GO" id="GO:0038083">
    <property type="term" value="P:peptidyl-tyrosine autophosphorylation"/>
    <property type="evidence" value="ECO:0000314"/>
    <property type="project" value="UniProtKB"/>
</dbReference>
<dbReference type="GO" id="GO:0010976">
    <property type="term" value="P:positive regulation of neuron projection development"/>
    <property type="evidence" value="ECO:0000318"/>
    <property type="project" value="GO_Central"/>
</dbReference>
<dbReference type="GO" id="GO:0051897">
    <property type="term" value="P:positive regulation of phosphatidylinositol 3-kinase/protein kinase B signal transduction"/>
    <property type="evidence" value="ECO:0000318"/>
    <property type="project" value="GO_Central"/>
</dbReference>
<dbReference type="GO" id="GO:0046777">
    <property type="term" value="P:protein autophosphorylation"/>
    <property type="evidence" value="ECO:0000314"/>
    <property type="project" value="UniProtKB"/>
</dbReference>
<dbReference type="GO" id="GO:0001558">
    <property type="term" value="P:regulation of cell growth"/>
    <property type="evidence" value="ECO:0007669"/>
    <property type="project" value="Ensembl"/>
</dbReference>
<dbReference type="GO" id="GO:0001952">
    <property type="term" value="P:regulation of cell-matrix adhesion"/>
    <property type="evidence" value="ECO:0007669"/>
    <property type="project" value="Ensembl"/>
</dbReference>
<dbReference type="GO" id="GO:0010715">
    <property type="term" value="P:regulation of extracellular matrix disassembly"/>
    <property type="evidence" value="ECO:0000315"/>
    <property type="project" value="UniProtKB"/>
</dbReference>
<dbReference type="GO" id="GO:0014909">
    <property type="term" value="P:smooth muscle cell migration"/>
    <property type="evidence" value="ECO:0000315"/>
    <property type="project" value="UniProtKB"/>
</dbReference>
<dbReference type="GO" id="GO:0061302">
    <property type="term" value="P:smooth muscle cell-matrix adhesion"/>
    <property type="evidence" value="ECO:0000315"/>
    <property type="project" value="UniProtKB"/>
</dbReference>
<dbReference type="GO" id="GO:0044319">
    <property type="term" value="P:wound healing, spreading of cells"/>
    <property type="evidence" value="ECO:0000315"/>
    <property type="project" value="UniProtKB"/>
</dbReference>
<dbReference type="CDD" id="cd00057">
    <property type="entry name" value="FA58C"/>
    <property type="match status" value="1"/>
</dbReference>
<dbReference type="CDD" id="cd05096">
    <property type="entry name" value="PTKc_DDR1"/>
    <property type="match status" value="1"/>
</dbReference>
<dbReference type="FunFam" id="2.60.120.260:FF:000007">
    <property type="entry name" value="Discoidin domain receptor tyrosine kinase 1"/>
    <property type="match status" value="1"/>
</dbReference>
<dbReference type="FunFam" id="1.10.510.10:FF:000053">
    <property type="entry name" value="Epithelial discoidin domain-containing receptor 1"/>
    <property type="match status" value="1"/>
</dbReference>
<dbReference type="FunFam" id="3.30.200.20:FF:000082">
    <property type="entry name" value="Epithelial discoidin domain-containing receptor 1"/>
    <property type="match status" value="1"/>
</dbReference>
<dbReference type="FunFam" id="2.60.120.1190:FF:000002">
    <property type="entry name" value="epithelial discoidin domain-containing receptor 1"/>
    <property type="match status" value="1"/>
</dbReference>
<dbReference type="Gene3D" id="2.60.120.1190">
    <property type="match status" value="1"/>
</dbReference>
<dbReference type="Gene3D" id="2.60.120.260">
    <property type="entry name" value="Galactose-binding domain-like"/>
    <property type="match status" value="1"/>
</dbReference>
<dbReference type="Gene3D" id="3.30.200.20">
    <property type="entry name" value="Phosphorylase Kinase, domain 1"/>
    <property type="match status" value="1"/>
</dbReference>
<dbReference type="Gene3D" id="1.10.510.10">
    <property type="entry name" value="Transferase(Phosphotransferase) domain 1"/>
    <property type="match status" value="1"/>
</dbReference>
<dbReference type="InterPro" id="IPR048525">
    <property type="entry name" value="DDR1-2_DS-like"/>
</dbReference>
<dbReference type="InterPro" id="IPR000421">
    <property type="entry name" value="FA58C"/>
</dbReference>
<dbReference type="InterPro" id="IPR008979">
    <property type="entry name" value="Galactose-bd-like_sf"/>
</dbReference>
<dbReference type="InterPro" id="IPR011009">
    <property type="entry name" value="Kinase-like_dom_sf"/>
</dbReference>
<dbReference type="InterPro" id="IPR000719">
    <property type="entry name" value="Prot_kinase_dom"/>
</dbReference>
<dbReference type="InterPro" id="IPR050122">
    <property type="entry name" value="RTK"/>
</dbReference>
<dbReference type="InterPro" id="IPR001245">
    <property type="entry name" value="Ser-Thr/Tyr_kinase_cat_dom"/>
</dbReference>
<dbReference type="InterPro" id="IPR008266">
    <property type="entry name" value="Tyr_kinase_AS"/>
</dbReference>
<dbReference type="InterPro" id="IPR020635">
    <property type="entry name" value="Tyr_kinase_cat_dom"/>
</dbReference>
<dbReference type="InterPro" id="IPR002011">
    <property type="entry name" value="Tyr_kinase_rcpt_2_CS"/>
</dbReference>
<dbReference type="PANTHER" id="PTHR24416:SF333">
    <property type="entry name" value="EPITHELIAL DISCOIDIN DOMAIN-CONTAINING RECEPTOR 1"/>
    <property type="match status" value="1"/>
</dbReference>
<dbReference type="PANTHER" id="PTHR24416">
    <property type="entry name" value="TYROSINE-PROTEIN KINASE RECEPTOR"/>
    <property type="match status" value="1"/>
</dbReference>
<dbReference type="Pfam" id="PF21114">
    <property type="entry name" value="DDR1-2_DS-like"/>
    <property type="match status" value="1"/>
</dbReference>
<dbReference type="Pfam" id="PF00754">
    <property type="entry name" value="F5_F8_type_C"/>
    <property type="match status" value="1"/>
</dbReference>
<dbReference type="Pfam" id="PF07714">
    <property type="entry name" value="PK_Tyr_Ser-Thr"/>
    <property type="match status" value="1"/>
</dbReference>
<dbReference type="PRINTS" id="PR00109">
    <property type="entry name" value="TYRKINASE"/>
</dbReference>
<dbReference type="SMART" id="SM00231">
    <property type="entry name" value="FA58C"/>
    <property type="match status" value="1"/>
</dbReference>
<dbReference type="SMART" id="SM00219">
    <property type="entry name" value="TyrKc"/>
    <property type="match status" value="1"/>
</dbReference>
<dbReference type="SUPFAM" id="SSF49785">
    <property type="entry name" value="Galactose-binding domain-like"/>
    <property type="match status" value="1"/>
</dbReference>
<dbReference type="SUPFAM" id="SSF56112">
    <property type="entry name" value="Protein kinase-like (PK-like)"/>
    <property type="match status" value="1"/>
</dbReference>
<dbReference type="PROSITE" id="PS01285">
    <property type="entry name" value="FA58C_1"/>
    <property type="match status" value="1"/>
</dbReference>
<dbReference type="PROSITE" id="PS01286">
    <property type="entry name" value="FA58C_2"/>
    <property type="match status" value="1"/>
</dbReference>
<dbReference type="PROSITE" id="PS50022">
    <property type="entry name" value="FA58C_3"/>
    <property type="match status" value="1"/>
</dbReference>
<dbReference type="PROSITE" id="PS50011">
    <property type="entry name" value="PROTEIN_KINASE_DOM"/>
    <property type="match status" value="1"/>
</dbReference>
<dbReference type="PROSITE" id="PS00109">
    <property type="entry name" value="PROTEIN_KINASE_TYR"/>
    <property type="match status" value="1"/>
</dbReference>
<dbReference type="PROSITE" id="PS00239">
    <property type="entry name" value="RECEPTOR_TYR_KIN_II"/>
    <property type="match status" value="1"/>
</dbReference>
<feature type="signal peptide" evidence="2">
    <location>
        <begin position="1"/>
        <end position="18"/>
    </location>
</feature>
<feature type="chain" id="PRO_0000016742" description="Epithelial discoidin domain-containing receptor 1">
    <location>
        <begin position="19"/>
        <end position="913"/>
    </location>
</feature>
<feature type="topological domain" description="Extracellular" evidence="2">
    <location>
        <begin position="21"/>
        <end position="417"/>
    </location>
</feature>
<feature type="transmembrane region" description="Helical" evidence="2">
    <location>
        <begin position="418"/>
        <end position="438"/>
    </location>
</feature>
<feature type="topological domain" description="Cytoplasmic" evidence="2">
    <location>
        <begin position="439"/>
        <end position="913"/>
    </location>
</feature>
<feature type="domain" description="F5/8 type C" evidence="3">
    <location>
        <begin position="31"/>
        <end position="185"/>
    </location>
</feature>
<feature type="domain" description="Protein kinase" evidence="4">
    <location>
        <begin position="610"/>
        <end position="905"/>
    </location>
</feature>
<feature type="region of interest" description="DS-like domain">
    <location>
        <begin position="192"/>
        <end position="367"/>
    </location>
</feature>
<feature type="region of interest" description="Disordered" evidence="6">
    <location>
        <begin position="470"/>
        <end position="499"/>
    </location>
</feature>
<feature type="short sequence motif" description="PPxY motif">
    <location>
        <begin position="481"/>
        <end position="484"/>
    </location>
</feature>
<feature type="compositionally biased region" description="Pro residues" evidence="6">
    <location>
        <begin position="479"/>
        <end position="496"/>
    </location>
</feature>
<feature type="active site" description="Proton acceptor" evidence="4 5">
    <location>
        <position position="766"/>
    </location>
</feature>
<feature type="binding site">
    <location>
        <position position="211"/>
    </location>
    <ligand>
        <name>Ca(2+)</name>
        <dbReference type="ChEBI" id="CHEBI:29108"/>
        <label>1</label>
    </ligand>
</feature>
<feature type="binding site">
    <location>
        <position position="230"/>
    </location>
    <ligand>
        <name>Ca(2+)</name>
        <dbReference type="ChEBI" id="CHEBI:29108"/>
        <label>1</label>
    </ligand>
</feature>
<feature type="binding site">
    <location>
        <position position="230"/>
    </location>
    <ligand>
        <name>Ca(2+)</name>
        <dbReference type="ChEBI" id="CHEBI:29108"/>
        <label>2</label>
    </ligand>
</feature>
<feature type="binding site">
    <location>
        <position position="233"/>
    </location>
    <ligand>
        <name>Ca(2+)</name>
        <dbReference type="ChEBI" id="CHEBI:29108"/>
        <label>2</label>
    </ligand>
</feature>
<feature type="binding site">
    <location>
        <position position="235"/>
    </location>
    <ligand>
        <name>Ca(2+)</name>
        <dbReference type="ChEBI" id="CHEBI:29108"/>
        <label>2</label>
    </ligand>
</feature>
<feature type="binding site">
    <location>
        <position position="253"/>
    </location>
    <ligand>
        <name>Ca(2+)</name>
        <dbReference type="ChEBI" id="CHEBI:29108"/>
        <label>1</label>
    </ligand>
</feature>
<feature type="binding site">
    <location>
        <position position="255"/>
    </location>
    <ligand>
        <name>Ca(2+)</name>
        <dbReference type="ChEBI" id="CHEBI:29108"/>
        <label>1</label>
    </ligand>
</feature>
<feature type="binding site">
    <location>
        <position position="360"/>
    </location>
    <ligand>
        <name>Ca(2+)</name>
        <dbReference type="ChEBI" id="CHEBI:29108"/>
        <label>2</label>
    </ligand>
</feature>
<feature type="binding site">
    <location>
        <position position="361"/>
    </location>
    <ligand>
        <name>Ca(2+)</name>
        <dbReference type="ChEBI" id="CHEBI:29108"/>
        <label>2</label>
    </ligand>
</feature>
<feature type="binding site" evidence="4">
    <location>
        <begin position="616"/>
        <end position="624"/>
    </location>
    <ligand>
        <name>ATP</name>
        <dbReference type="ChEBI" id="CHEBI:30616"/>
    </ligand>
</feature>
<feature type="binding site">
    <location>
        <position position="655"/>
    </location>
    <ligand>
        <name>ATP</name>
        <dbReference type="ChEBI" id="CHEBI:30616"/>
    </ligand>
</feature>
<feature type="modified residue" description="Phosphotyrosine; by autocatalysis" evidence="19">
    <location>
        <position position="484"/>
    </location>
</feature>
<feature type="modified residue" description="Phosphotyrosine; by autocatalysis" evidence="19 26">
    <location>
        <position position="513"/>
    </location>
</feature>
<feature type="modified residue" description="Phosphotyrosine; by autocatalysis" evidence="19">
    <location>
        <position position="520"/>
    </location>
</feature>
<feature type="modified residue" description="Phosphoserine" evidence="38">
    <location>
        <position position="631"/>
    </location>
</feature>
<feature type="modified residue" description="Phosphotyrosine; by autocatalysis" evidence="36">
    <location>
        <position position="740"/>
    </location>
</feature>
<feature type="modified residue" description="Phosphotyrosine; by autocatalysis" evidence="19">
    <location>
        <position position="792"/>
    </location>
</feature>
<feature type="modified residue" description="Phosphotyrosine; by autocatalysis" evidence="19">
    <location>
        <position position="796"/>
    </location>
</feature>
<feature type="modified residue" description="Phosphotyrosine; by autocatalysis" evidence="19">
    <location>
        <position position="797"/>
    </location>
</feature>
<feature type="glycosylation site" description="N-linked (GlcNAc...) asparagine" evidence="17 19">
    <location>
        <position position="211"/>
    </location>
</feature>
<feature type="glycosylation site" description="N-linked (GlcNAc...) asparagine" evidence="17 19">
    <location>
        <position position="260"/>
    </location>
</feature>
<feature type="glycosylation site" description="N-linked (GlcNAc...) asparagine" evidence="2">
    <location>
        <position position="370"/>
    </location>
</feature>
<feature type="glycosylation site" description="N-linked (GlcNAc...) asparagine" evidence="2">
    <location>
        <position position="394"/>
    </location>
</feature>
<feature type="disulfide bond" evidence="3 17">
    <location>
        <begin position="31"/>
        <end position="185"/>
    </location>
</feature>
<feature type="disulfide bond" evidence="3 17">
    <location>
        <begin position="74"/>
        <end position="177"/>
    </location>
</feature>
<feature type="disulfide bond" evidence="3 17">
    <location>
        <begin position="303"/>
        <end position="348"/>
    </location>
</feature>
<feature type="splice variant" id="VSP_043582" description="In isoform 5." evidence="27">
    <original>M</original>
    <variation>MSLPRCCPHPLRPEGSGAM</variation>
    <location>
        <position position="1"/>
    </location>
</feature>
<feature type="splice variant" id="VSP_036916" description="In isoform 3." evidence="29">
    <original>GLLSYTAPVGQTMYLSEAVYLNDSTYDGHTVGGLQYGGLGQLADGVVGLDDFRK</original>
    <variation>CSMGVWASWQMVWWGWMTLGRVRSCGSGQAMTMWDGATTASPVAMWRWSLSLTG</variation>
    <location>
        <begin position="190"/>
        <end position="243"/>
    </location>
</feature>
<feature type="splice variant" id="VSP_036917" description="In isoform 3." evidence="29">
    <location>
        <begin position="244"/>
        <end position="913"/>
    </location>
</feature>
<feature type="splice variant" id="VSP_002953" description="In isoform 2 and isoform 5." evidence="27 28 30 31 32 33 34">
    <location>
        <begin position="506"/>
        <end position="542"/>
    </location>
</feature>
<feature type="splice variant" id="VSP_038057" description="In isoform 4." evidence="30">
    <original>A</original>
    <variation>ASFSLFS</variation>
    <location>
        <position position="665"/>
    </location>
</feature>
<feature type="sequence variant" id="VAR_041492" description="In dbSNP:rs55901302." evidence="10">
    <original>S</original>
    <variation>G</variation>
    <location>
        <position position="17"/>
    </location>
</feature>
<feature type="sequence variant" id="VAR_041493" description="In dbSNP:rs34544756." evidence="10">
    <original>V</original>
    <variation>A</variation>
    <location>
        <position position="100"/>
    </location>
</feature>
<feature type="sequence variant" id="VAR_041494" description="In dbSNP:rs55980643." evidence="10">
    <original>R</original>
    <variation>Q</variation>
    <location>
        <position position="169"/>
    </location>
</feature>
<feature type="sequence variant" id="VAR_041495" description="In dbSNP:rs56231803." evidence="10">
    <original>A</original>
    <variation>D</variation>
    <location>
        <position position="170"/>
    </location>
</feature>
<feature type="sequence variant" id="VAR_041496" description="In dbSNP:rs56024191." evidence="10">
    <original>R</original>
    <variation>W</variation>
    <location>
        <position position="306"/>
    </location>
</feature>
<feature type="sequence variant" id="VAR_041497" description="In a lung squamous cell carcinoma sample; somatic mutation." evidence="10">
    <original>S</original>
    <variation>A</variation>
    <location>
        <position position="496"/>
    </location>
</feature>
<feature type="sequence variant" id="VAR_049716" description="In dbSNP:rs2524235." evidence="24 25">
    <original>L</original>
    <variation>V</variation>
    <location>
        <position position="833"/>
    </location>
</feature>
<feature type="mutagenesis site" description="Inhibits collagen-induced phosphorylation." evidence="19">
    <original>R</original>
    <variation>A</variation>
    <location>
        <position position="105"/>
    </location>
</feature>
<feature type="mutagenesis site" description="Phosphorylates regardless of collagen presence, collagen addition does not alter significantly the levels of constitutive phosphorylation." evidence="19">
    <original>N</original>
    <variation>A</variation>
    <location>
        <position position="211"/>
    </location>
</feature>
<feature type="mutagenesis site" description="Sustained phosphorylation regardless of collagen presence, collagen addition does not alter significantly the levels of constitutive phosphorylation. Located intracellularly and at the cell surface. Displays a reduced rate of receptor internalization, which is not altered in the presence of collagen. Able to bind collagen as wild-type. Exhibits enhanced collagen-independent receptor dimerization. Complete loss of the collagen-independent constitutive activation; when associated with A-655." evidence="19">
    <original>N</original>
    <variation>Q</variation>
    <location>
        <position position="211"/>
    </location>
</feature>
<feature type="mutagenesis site" description="Phosphorylates regardless of collagen presence, collagen addition does not alter significantly the levels of constitutive phosphorylation." evidence="19">
    <original>S</original>
    <variation>A</variation>
    <location>
        <position position="213"/>
    </location>
</feature>
<feature type="mutagenesis site" description="Phosphorylates in response to collagen, but at lower levels compared to wild-type. No activation in the absence of collagen." evidence="19">
    <original>N</original>
    <variation>Q</variation>
    <location>
        <position position="260"/>
    </location>
</feature>
<feature type="mutagenesis site" description="Phosphorylates in response to collagen, but at lower levels compared to wild-type. No activation in the absence of collagen." evidence="19">
    <original>N</original>
    <variation>Q</variation>
    <location>
        <position position="371"/>
    </location>
</feature>
<feature type="mutagenesis site" description="Phosphorylates in response to collagen, but at lower levels compared to wild-type. Phosphorylates in response to collagen, but at lower levels compared to wild-type; when associated with A-393." evidence="19">
    <original>T</original>
    <variation>A</variation>
    <location>
        <position position="379"/>
    </location>
</feature>
<feature type="mutagenesis site" description="Phosphorylates in response to collagen, but at lower levels compared to wild-type. Phosphorylates in response to collagen, but at lower levels compared to wild-type; when associated with A-379." evidence="19">
    <original>T</original>
    <variation>A</variation>
    <location>
        <position position="393"/>
    </location>
</feature>
<feature type="mutagenesis site" description="Phosphorylates in response to collagen, but at lower levels compared to wild-type. No activation in the absence of collagen." evidence="19">
    <original>N</original>
    <variation>Q</variation>
    <location>
        <position position="394"/>
    </location>
</feature>
<feature type="mutagenesis site" description="Loss of kinase activity. Complete loss of the collagen-independent constitutive activation; when associated with Q-211." evidence="19">
    <original>K</original>
    <variation>A</variation>
    <location>
        <position position="655"/>
    </location>
</feature>
<feature type="mutagenesis site" description="Confers over 20-fold resistance to the ability of an inhibitor to inhibit autophosphorylation." evidence="18">
    <original>G</original>
    <variation>A</variation>
    <location>
        <position position="707"/>
    </location>
</feature>
<feature type="mutagenesis site" description="Abolishes interaction with PTPN11." evidence="9">
    <original>Y</original>
    <variation>F</variation>
    <location>
        <position position="740"/>
    </location>
</feature>
<feature type="sequence conflict" description="In Ref. 2; AAA02866 and 5; AAC50917." evidence="35" ref="2 5">
    <original>L</original>
    <variation>V</variation>
    <location>
        <position position="94"/>
    </location>
</feature>
<feature type="sequence conflict" description="In Ref. 14; AAH70070." evidence="35" ref="14">
    <original>R</original>
    <variation>H</variation>
    <location>
        <position position="165"/>
    </location>
</feature>
<feature type="sequence conflict" description="In Ref. 8; ACF47649." evidence="35" ref="8">
    <original>VH</original>
    <variation>MW</variation>
    <location>
        <begin position="285"/>
        <end position="286"/>
    </location>
</feature>
<feature type="sequence conflict" description="In Ref. 14; AAH70070." evidence="35" ref="14">
    <original>P</original>
    <variation>Q</variation>
    <location>
        <position position="741"/>
    </location>
</feature>
<feature type="sequence conflict" description="In Ref. 6; CAA66871." evidence="35" ref="6">
    <original>QLTDEQVIENAGEFFRDQGRQ</original>
    <variation>SAHRRAGHRERGGVLPGPGPA</variation>
    <location>
        <begin position="847"/>
        <end position="867"/>
    </location>
</feature>
<feature type="turn" evidence="39">
    <location>
        <begin position="37"/>
        <end position="39"/>
    </location>
</feature>
<feature type="helix" evidence="39">
    <location>
        <begin position="44"/>
        <end position="46"/>
    </location>
</feature>
<feature type="strand" evidence="39">
    <location>
        <begin position="47"/>
        <end position="50"/>
    </location>
</feature>
<feature type="helix" evidence="39">
    <location>
        <begin position="55"/>
        <end position="57"/>
    </location>
</feature>
<feature type="helix" evidence="39">
    <location>
        <begin position="59"/>
        <end position="61"/>
    </location>
</feature>
<feature type="turn" evidence="39">
    <location>
        <begin position="68"/>
        <end position="70"/>
    </location>
</feature>
<feature type="strand" evidence="39">
    <location>
        <begin position="71"/>
        <end position="73"/>
    </location>
</feature>
<feature type="strand" evidence="39">
    <location>
        <begin position="87"/>
        <end position="103"/>
    </location>
</feature>
<feature type="helix" evidence="39">
    <location>
        <begin position="107"/>
        <end position="109"/>
    </location>
</feature>
<feature type="strand" evidence="39">
    <location>
        <begin position="116"/>
        <end position="127"/>
    </location>
</feature>
<feature type="strand" evidence="39">
    <location>
        <begin position="129"/>
        <end position="131"/>
    </location>
</feature>
<feature type="strand" evidence="39">
    <location>
        <begin position="145"/>
        <end position="148"/>
    </location>
</feature>
<feature type="strand" evidence="39">
    <location>
        <begin position="151"/>
        <end position="169"/>
    </location>
</feature>
<feature type="strand" evidence="39">
    <location>
        <begin position="171"/>
        <end position="173"/>
    </location>
</feature>
<feature type="strand" evidence="39">
    <location>
        <begin position="178"/>
        <end position="186"/>
    </location>
</feature>
<feature type="strand" evidence="39">
    <location>
        <begin position="191"/>
        <end position="197"/>
    </location>
</feature>
<feature type="strand" evidence="39">
    <location>
        <begin position="204"/>
        <end position="206"/>
    </location>
</feature>
<feature type="strand" evidence="39">
    <location>
        <begin position="217"/>
        <end position="220"/>
    </location>
</feature>
<feature type="strand" evidence="39">
    <location>
        <begin position="223"/>
        <end position="226"/>
    </location>
</feature>
<feature type="helix" evidence="39">
    <location>
        <begin position="230"/>
        <end position="232"/>
    </location>
</feature>
<feature type="strand" evidence="48">
    <location>
        <begin position="239"/>
        <end position="241"/>
    </location>
</feature>
<feature type="strand" evidence="39">
    <location>
        <begin position="245"/>
        <end position="248"/>
    </location>
</feature>
<feature type="turn" evidence="39">
    <location>
        <begin position="251"/>
        <end position="254"/>
    </location>
</feature>
<feature type="strand" evidence="39">
    <location>
        <begin position="256"/>
        <end position="259"/>
    </location>
</feature>
<feature type="helix" evidence="39">
    <location>
        <begin position="260"/>
        <end position="262"/>
    </location>
</feature>
<feature type="strand" evidence="39">
    <location>
        <begin position="266"/>
        <end position="287"/>
    </location>
</feature>
<feature type="helix" evidence="39">
    <location>
        <begin position="291"/>
        <end position="293"/>
    </location>
</feature>
<feature type="strand" evidence="39">
    <location>
        <begin position="299"/>
        <end position="306"/>
    </location>
</feature>
<feature type="strand" evidence="39">
    <location>
        <begin position="308"/>
        <end position="312"/>
    </location>
</feature>
<feature type="strand" evidence="39">
    <location>
        <begin position="314"/>
        <end position="316"/>
    </location>
</feature>
<feature type="strand" evidence="39">
    <location>
        <begin position="318"/>
        <end position="321"/>
    </location>
</feature>
<feature type="strand" evidence="39">
    <location>
        <begin position="332"/>
        <end position="351"/>
    </location>
</feature>
<feature type="strand" evidence="39">
    <location>
        <begin position="353"/>
        <end position="367"/>
    </location>
</feature>
<feature type="strand" evidence="47">
    <location>
        <begin position="582"/>
        <end position="584"/>
    </location>
</feature>
<feature type="helix" evidence="43">
    <location>
        <begin position="607"/>
        <end position="609"/>
    </location>
</feature>
<feature type="strand" evidence="43">
    <location>
        <begin position="610"/>
        <end position="618"/>
    </location>
</feature>
<feature type="strand" evidence="43">
    <location>
        <begin position="620"/>
        <end position="631"/>
    </location>
</feature>
<feature type="helix" evidence="43">
    <location>
        <begin position="632"/>
        <end position="634"/>
    </location>
</feature>
<feature type="strand" evidence="40">
    <location>
        <begin position="638"/>
        <end position="640"/>
    </location>
</feature>
<feature type="strand" evidence="42">
    <location>
        <begin position="646"/>
        <end position="648"/>
    </location>
</feature>
<feature type="strand" evidence="43">
    <location>
        <begin position="651"/>
        <end position="657"/>
    </location>
</feature>
<feature type="helix" evidence="43">
    <location>
        <begin position="663"/>
        <end position="676"/>
    </location>
</feature>
<feature type="strand" evidence="43">
    <location>
        <begin position="687"/>
        <end position="691"/>
    </location>
</feature>
<feature type="strand" evidence="43">
    <location>
        <begin position="693"/>
        <end position="696"/>
    </location>
</feature>
<feature type="strand" evidence="43">
    <location>
        <begin position="698"/>
        <end position="702"/>
    </location>
</feature>
<feature type="helix" evidence="43">
    <location>
        <begin position="709"/>
        <end position="714"/>
    </location>
</feature>
<feature type="strand" evidence="45">
    <location>
        <begin position="717"/>
        <end position="720"/>
    </location>
</feature>
<feature type="strand" evidence="44">
    <location>
        <begin position="736"/>
        <end position="738"/>
    </location>
</feature>
<feature type="helix" evidence="43">
    <location>
        <begin position="740"/>
        <end position="759"/>
    </location>
</feature>
<feature type="helix" evidence="43">
    <location>
        <begin position="769"/>
        <end position="771"/>
    </location>
</feature>
<feature type="strand" evidence="43">
    <location>
        <begin position="772"/>
        <end position="774"/>
    </location>
</feature>
<feature type="helix" evidence="43">
    <location>
        <begin position="776"/>
        <end position="778"/>
    </location>
</feature>
<feature type="strand" evidence="43">
    <location>
        <begin position="780"/>
        <end position="782"/>
    </location>
</feature>
<feature type="helix" evidence="47">
    <location>
        <begin position="786"/>
        <end position="788"/>
    </location>
</feature>
<feature type="helix" evidence="43">
    <location>
        <begin position="790"/>
        <end position="795"/>
    </location>
</feature>
<feature type="strand" evidence="46">
    <location>
        <begin position="796"/>
        <end position="799"/>
    </location>
</feature>
<feature type="strand" evidence="46">
    <location>
        <begin position="802"/>
        <end position="805"/>
    </location>
</feature>
<feature type="helix" evidence="43">
    <location>
        <begin position="807"/>
        <end position="809"/>
    </location>
</feature>
<feature type="helix" evidence="43">
    <location>
        <begin position="812"/>
        <end position="817"/>
    </location>
</feature>
<feature type="helix" evidence="43">
    <location>
        <begin position="822"/>
        <end position="837"/>
    </location>
</feature>
<feature type="turn" evidence="43">
    <location>
        <begin position="838"/>
        <end position="840"/>
    </location>
</feature>
<feature type="turn" evidence="43">
    <location>
        <begin position="844"/>
        <end position="847"/>
    </location>
</feature>
<feature type="helix" evidence="43">
    <location>
        <begin position="850"/>
        <end position="862"/>
    </location>
</feature>
<feature type="helix" evidence="43">
    <location>
        <begin position="878"/>
        <end position="887"/>
    </location>
</feature>
<feature type="helix" evidence="43">
    <location>
        <begin position="892"/>
        <end position="894"/>
    </location>
</feature>
<feature type="helix" evidence="43">
    <location>
        <begin position="898"/>
        <end position="907"/>
    </location>
</feature>
<feature type="helix" evidence="41">
    <location>
        <begin position="908"/>
        <end position="911"/>
    </location>
</feature>
<name>DDR1_HUMAN</name>
<organism>
    <name type="scientific">Homo sapiens</name>
    <name type="common">Human</name>
    <dbReference type="NCBI Taxonomy" id="9606"/>
    <lineage>
        <taxon>Eukaryota</taxon>
        <taxon>Metazoa</taxon>
        <taxon>Chordata</taxon>
        <taxon>Craniata</taxon>
        <taxon>Vertebrata</taxon>
        <taxon>Euteleostomi</taxon>
        <taxon>Mammalia</taxon>
        <taxon>Eutheria</taxon>
        <taxon>Euarchontoglires</taxon>
        <taxon>Primates</taxon>
        <taxon>Haplorrhini</taxon>
        <taxon>Catarrhini</taxon>
        <taxon>Hominidae</taxon>
        <taxon>Homo</taxon>
    </lineage>
</organism>
<evidence type="ECO:0000250" key="1"/>
<evidence type="ECO:0000255" key="2"/>
<evidence type="ECO:0000255" key="3">
    <source>
        <dbReference type="PROSITE-ProRule" id="PRU00081"/>
    </source>
</evidence>
<evidence type="ECO:0000255" key="4">
    <source>
        <dbReference type="PROSITE-ProRule" id="PRU00159"/>
    </source>
</evidence>
<evidence type="ECO:0000255" key="5">
    <source>
        <dbReference type="PROSITE-ProRule" id="PRU10028"/>
    </source>
</evidence>
<evidence type="ECO:0000256" key="6">
    <source>
        <dbReference type="SAM" id="MobiDB-lite"/>
    </source>
</evidence>
<evidence type="ECO:0000269" key="7">
    <source>
    </source>
</evidence>
<evidence type="ECO:0000269" key="8">
    <source>
    </source>
</evidence>
<evidence type="ECO:0000269" key="9">
    <source>
    </source>
</evidence>
<evidence type="ECO:0000269" key="10">
    <source>
    </source>
</evidence>
<evidence type="ECO:0000269" key="11">
    <source>
    </source>
</evidence>
<evidence type="ECO:0000269" key="12">
    <source>
    </source>
</evidence>
<evidence type="ECO:0000269" key="13">
    <source>
    </source>
</evidence>
<evidence type="ECO:0000269" key="14">
    <source>
    </source>
</evidence>
<evidence type="ECO:0000269" key="15">
    <source>
    </source>
</evidence>
<evidence type="ECO:0000269" key="16">
    <source>
    </source>
</evidence>
<evidence type="ECO:0000269" key="17">
    <source>
    </source>
</evidence>
<evidence type="ECO:0000269" key="18">
    <source>
    </source>
</evidence>
<evidence type="ECO:0000269" key="19">
    <source>
    </source>
</evidence>
<evidence type="ECO:0000269" key="20">
    <source>
    </source>
</evidence>
<evidence type="ECO:0000269" key="21">
    <source>
    </source>
</evidence>
<evidence type="ECO:0000269" key="22">
    <source>
    </source>
</evidence>
<evidence type="ECO:0000269" key="23">
    <source>
    </source>
</evidence>
<evidence type="ECO:0000269" key="24">
    <source>
    </source>
</evidence>
<evidence type="ECO:0000269" key="25">
    <source>
    </source>
</evidence>
<evidence type="ECO:0000269" key="26">
    <source>
    </source>
</evidence>
<evidence type="ECO:0000303" key="27">
    <source>
    </source>
</evidence>
<evidence type="ECO:0000303" key="28">
    <source>
    </source>
</evidence>
<evidence type="ECO:0000303" key="29">
    <source>
    </source>
</evidence>
<evidence type="ECO:0000303" key="30">
    <source>
    </source>
</evidence>
<evidence type="ECO:0000303" key="31">
    <source>
    </source>
</evidence>
<evidence type="ECO:0000303" key="32">
    <source>
    </source>
</evidence>
<evidence type="ECO:0000303" key="33">
    <source>
    </source>
</evidence>
<evidence type="ECO:0000303" key="34">
    <source ref="10"/>
</evidence>
<evidence type="ECO:0000305" key="35"/>
<evidence type="ECO:0000305" key="36">
    <source>
    </source>
</evidence>
<evidence type="ECO:0000305" key="37">
    <source>
    </source>
</evidence>
<evidence type="ECO:0007744" key="38">
    <source>
    </source>
</evidence>
<evidence type="ECO:0007829" key="39">
    <source>
        <dbReference type="PDB" id="4AG4"/>
    </source>
</evidence>
<evidence type="ECO:0007829" key="40">
    <source>
        <dbReference type="PDB" id="5SAW"/>
    </source>
</evidence>
<evidence type="ECO:0007829" key="41">
    <source>
        <dbReference type="PDB" id="5SB1"/>
    </source>
</evidence>
<evidence type="ECO:0007829" key="42">
    <source>
        <dbReference type="PDB" id="5SB2"/>
    </source>
</evidence>
<evidence type="ECO:0007829" key="43">
    <source>
        <dbReference type="PDB" id="6FEX"/>
    </source>
</evidence>
<evidence type="ECO:0007829" key="44">
    <source>
        <dbReference type="PDB" id="6FIL"/>
    </source>
</evidence>
<evidence type="ECO:0007829" key="45">
    <source>
        <dbReference type="PDB" id="6FIO"/>
    </source>
</evidence>
<evidence type="ECO:0007829" key="46">
    <source>
        <dbReference type="PDB" id="6FIQ"/>
    </source>
</evidence>
<evidence type="ECO:0007829" key="47">
    <source>
        <dbReference type="PDB" id="6Y23"/>
    </source>
</evidence>
<evidence type="ECO:0007829" key="48">
    <source>
        <dbReference type="PDB" id="8PE9"/>
    </source>
</evidence>